<feature type="signal peptide" evidence="29 36">
    <location>
        <begin position="1"/>
        <end position="28"/>
    </location>
</feature>
<feature type="chain" id="PRO_0000008613" description="Cholinesterase">
    <location>
        <begin position="29"/>
        <end position="602"/>
    </location>
</feature>
<feature type="active site" description="Acyl-ester intermediate" evidence="1 4">
    <location>
        <position position="226"/>
    </location>
</feature>
<feature type="active site" description="Charge relay system" evidence="4">
    <location>
        <position position="353"/>
    </location>
</feature>
<feature type="active site" description="Charge relay system" evidence="4">
    <location>
        <position position="466"/>
    </location>
</feature>
<feature type="binding site" evidence="46">
    <location>
        <position position="110"/>
    </location>
    <ligand>
        <name>tacrine</name>
        <dbReference type="ChEBI" id="CHEBI:187896"/>
        <note>inhibitor</note>
    </ligand>
</feature>
<feature type="binding site">
    <location>
        <begin position="144"/>
        <end position="145"/>
    </location>
    <ligand>
        <name>substrate</name>
    </ligand>
</feature>
<feature type="binding site" evidence="46">
    <location>
        <position position="466"/>
    </location>
    <ligand>
        <name>tacrine</name>
        <dbReference type="ChEBI" id="CHEBI:187896"/>
        <note>inhibitor</note>
    </ligand>
</feature>
<feature type="modified residue" description="Phosphoserine" evidence="30">
    <location>
        <position position="226"/>
    </location>
</feature>
<feature type="glycosylation site" description="N-linked (GlcNAc...) (complex) asparagine" evidence="15 21">
    <location>
        <position position="45"/>
    </location>
</feature>
<feature type="glycosylation site" description="N-linked (GlcNAc...) (complex) asparagine" evidence="4 12 15 17 19 21 23 26 31">
    <location>
        <position position="85"/>
    </location>
</feature>
<feature type="glycosylation site" description="N-linked (GlcNAc...) (complex) asparagine" evidence="4 12 17 19 21 23 25 26 31">
    <location>
        <position position="134"/>
    </location>
</feature>
<feature type="glycosylation site" description="N-linked (GlcNAc...) (complex) asparagine" evidence="4 12 17 21 26 31">
    <location>
        <position position="269"/>
    </location>
</feature>
<feature type="glycosylation site" description="N-linked (GlcNAc...) (complex) asparagine" evidence="21 23 24 25 26 31">
    <location>
        <position position="284"/>
    </location>
</feature>
<feature type="glycosylation site" description="N-linked (GlcNAc...) (complex) asparagine" evidence="4 12 15 17 19 21 23 26 31">
    <location>
        <position position="369"/>
    </location>
</feature>
<feature type="glycosylation site" description="N-linked (GlcNAc...) (complex) asparagine" evidence="15 21">
    <location>
        <position position="483"/>
    </location>
</feature>
<feature type="glycosylation site" description="N-linked (GlcNAc...) asparagine" evidence="10 15 36">
    <location>
        <position position="509"/>
    </location>
</feature>
<feature type="glycosylation site" description="N-linked (GlcNAc...) asparagine" evidence="4 12 17 19 23 26 31">
    <location>
        <position position="513"/>
    </location>
</feature>
<feature type="glycosylation site" description="N-linked (GlcNAc...) asparagine" evidence="10 15 36">
    <location>
        <position position="514"/>
    </location>
</feature>
<feature type="disulfide bond">
    <location>
        <begin position="93"/>
        <end position="120"/>
    </location>
</feature>
<feature type="disulfide bond">
    <location>
        <begin position="280"/>
        <end position="291"/>
    </location>
</feature>
<feature type="disulfide bond">
    <location>
        <begin position="428"/>
        <end position="547"/>
    </location>
</feature>
<feature type="disulfide bond" description="Interchain">
    <location>
        <position position="599"/>
    </location>
</feature>
<feature type="sequence variant" id="VAR_040011" description="In BCHED." evidence="41">
    <location>
        <position position="32"/>
    </location>
</feature>
<feature type="sequence variant" id="VAR_072094" description="Does not affect enzymatic activity; dbSNP:rs116047990." evidence="22">
    <original>K</original>
    <variation>R</variation>
    <location>
        <position position="40"/>
    </location>
</feature>
<feature type="sequence variant" id="VAR_040012" description="In BCHED; dbSNP:rs56309853." evidence="41">
    <original>T</original>
    <variation>M</variation>
    <location>
        <position position="52"/>
    </location>
</feature>
<feature type="sequence variant" id="VAR_040013" description="In BCHED; dbSNP:rs531738678." evidence="5">
    <original>F</original>
    <variation>I</variation>
    <location>
        <position position="56"/>
    </location>
</feature>
<feature type="sequence variant" id="VAR_040014" description="In BCHED; enzymatically inactive in the plasma; dbSNP:rs116097205." evidence="38">
    <original>Y</original>
    <variation>C</variation>
    <location>
        <position position="61"/>
    </location>
</feature>
<feature type="sequence variant" id="VAR_072730" description="In BCHED; reduced enzyme activity with butyrylthiocholine as substrate; inactive with butyrylthiocholine as substrate in the presence of G-98; 2-fold lower affinity for butyrylthiocholine; 10-fold lower affinity for butyrylthiocholine in the presence of G-98; dbSNP:rs1553778274." evidence="33">
    <original>A</original>
    <variation>V</variation>
    <location>
        <position position="62"/>
    </location>
</feature>
<feature type="sequence variant" id="VAR_040015" description="In BCHED; seems to cause reduced expression of the protein; dbSNP:rs148170012." evidence="38">
    <original>P</original>
    <variation>S</variation>
    <location>
        <position position="65"/>
    </location>
</feature>
<feature type="sequence variant" id="VAR_002360" description="In BCHED; atypical form; reduced enzyme activity with butyrylthiocholine as substrate; inactive with butyrylthiocholine as substrate in the presence of V-62; 2-fold lower affinity for butyrylthiocholine; 10-fold lower affinity for butyrylthiocholine in the presence of V-62 or at homozygosity; dbSNP:rs1799807." evidence="3 6 13 33 34 40">
    <original>D</original>
    <variation>G</variation>
    <location>
        <position position="98"/>
    </location>
</feature>
<feature type="sequence variant" id="VAR_040016" description="In BCHED." evidence="3">
    <original>D</original>
    <variation>H</variation>
    <location>
        <position position="98"/>
    </location>
</feature>
<feature type="sequence variant" id="VAR_072095" description="In BCHED; reduced enzyme activity; dbSNP:rs979653503." evidence="13 18">
    <original>G</original>
    <variation>R</variation>
    <location>
        <position position="103"/>
    </location>
</feature>
<feature type="sequence variant" id="VAR_072096" description="In BCHED; the mutant undergoes rapid degradation; dbSNP:rs1714937947." evidence="13 18">
    <original>E</original>
    <variation>D</variation>
    <location>
        <position position="118"/>
    </location>
</feature>
<feature type="sequence variant" id="VAR_040017" description="In BCHED; dbSNP:rs1339128583." evidence="5">
    <original>N</original>
    <variation>Y</variation>
    <location>
        <position position="124"/>
    </location>
</feature>
<feature type="sequence variant" id="VAR_072097" description="Does not affect enzyme activity; dbSNP:rs755600722." evidence="13 18">
    <original>I</original>
    <variation>M</variation>
    <location>
        <position position="127"/>
    </location>
</feature>
<feature type="sequence variant" id="VAR_040018" description="In BCHED; dbSNP:rs3732880." evidence="41">
    <original>P</original>
    <variation>S</variation>
    <location>
        <position position="128"/>
    </location>
</feature>
<feature type="sequence variant" id="VAR_040019" description="In BCHED; dbSNP:rs201820739." evidence="40">
    <original>G</original>
    <variation>D</variation>
    <location>
        <position position="143"/>
    </location>
</feature>
<feature type="sequence variant" id="VAR_040020" description="In BCHED; seems to cause reduced expression of the protein; dbSNP:rs747598704." evidence="38">
    <original>L</original>
    <variation>F</variation>
    <location>
        <position position="153"/>
    </location>
</feature>
<feature type="sequence variant" id="VAR_040021" description="In BCHED; dbSNP:rs121918558." evidence="43">
    <original>Y</original>
    <variation>C</variation>
    <location>
        <position position="156"/>
    </location>
</feature>
<feature type="sequence variant" id="VAR_040022" description="In BCHED; allele H variant; dbSNP:rs527843566." evidence="6">
    <original>V</original>
    <variation>M</variation>
    <location>
        <position position="170"/>
    </location>
</feature>
<feature type="sequence variant" id="VAR_040023" description="In BCHED; seems to cause reduced expression of the protein; dbSNP:rs781368801." evidence="38">
    <original>D</original>
    <variation>E</variation>
    <location>
        <position position="198"/>
    </location>
</feature>
<feature type="sequence variant" id="VAR_040024" description="In BCHED; enzymatically inactive in the plasma; dbSNP:rs370077923." evidence="38">
    <original>S</original>
    <variation>G</variation>
    <location>
        <position position="226"/>
    </location>
</feature>
<feature type="sequence variant" id="VAR_040025" description="In BCHED." evidence="44">
    <original>A</original>
    <variation>V</variation>
    <location>
        <position position="227"/>
    </location>
</feature>
<feature type="sequence variant" id="VAR_040026" description="In BCHED; enzymatically inactive in the plasma." evidence="38">
    <original>A</original>
    <variation>T</variation>
    <location>
        <position position="229"/>
    </location>
</feature>
<feature type="sequence variant" id="VAR_072098" description="In BCHED; dbSNP:rs1714916354." evidence="32">
    <original>V</original>
    <variation>D</variation>
    <location>
        <position position="232"/>
    </location>
</feature>
<feature type="sequence variant" id="VAR_040027" description="In BCHED; allele fluoride-1; dbSNP:rs28933389." evidence="3 8">
    <original>T</original>
    <variation>M</variation>
    <location>
        <position position="271"/>
    </location>
</feature>
<feature type="sequence variant" id="VAR_040028" description="In BCHED; dbSNP:rs892642457." evidence="37 41">
    <original>T</original>
    <variation>P</variation>
    <location>
        <position position="278"/>
    </location>
</feature>
<feature type="sequence variant" id="VAR_040029" description="In dbSNP:rs16849700.">
    <original>E</original>
    <variation>D</variation>
    <location>
        <position position="283"/>
    </location>
</feature>
<feature type="sequence variant" id="VAR_040030" description="In BCHED; dbSNP:rs115624085." evidence="41">
    <original>K</original>
    <variation>R</variation>
    <location>
        <position position="295"/>
    </location>
</feature>
<feature type="sequence variant" id="VAR_072099" description="Does not affect enzymatic activity; dbSNP:rs754644618." evidence="22">
    <original>V</original>
    <variation>M</variation>
    <location>
        <position position="322"/>
    </location>
</feature>
<feature type="sequence variant" id="VAR_040031" description="In BCHED; expressed at very low level; dbSNP:rs104893684." evidence="16">
    <original>L</original>
    <variation>P</variation>
    <location>
        <position position="335"/>
    </location>
</feature>
<feature type="sequence variant" id="VAR_040032" description="In BCHED; dbSNP:rs770337031." evidence="20">
    <original>A</original>
    <variation>D</variation>
    <location>
        <position position="356"/>
    </location>
</feature>
<feature type="sequence variant" id="VAR_002362" description="In BCHED; BChE variant form; fluoride-resistant; dbSNP:rs121918557." evidence="2 39 41 42">
    <original>L</original>
    <variation>I</variation>
    <location>
        <position position="358"/>
    </location>
</feature>
<feature type="sequence variant" id="VAR_072100" description="In BCHED; results in 20% of activity compared to wild-type." evidence="22">
    <original>G</original>
    <variation>C</variation>
    <location>
        <position position="361"/>
    </location>
</feature>
<feature type="sequence variant" id="VAR_040033" description="In BCHED; dbSNP:rs115129687." evidence="2 14 37 41">
    <original>G</original>
    <variation>R</variation>
    <location>
        <position position="393"/>
    </location>
</feature>
<feature type="sequence variant" id="VAR_040034" description="In BCHED; dbSNP:rs745364489." evidence="5 11">
    <original>R</original>
    <variation>C</variation>
    <location>
        <position position="414"/>
    </location>
</feature>
<feature type="sequence variant" id="VAR_040035" description="In BCHED; allele fluoride-2; dbSNP:rs28933390." evidence="8">
    <original>G</original>
    <variation>V</variation>
    <location>
        <position position="418"/>
    </location>
</feature>
<feature type="sequence variant" id="VAR_040036" description="In BCHED." evidence="37 41">
    <original>F</original>
    <variation>S</variation>
    <location>
        <position position="446"/>
    </location>
</feature>
<feature type="sequence variant" id="VAR_040037" description="In BCHED; dbSNP:rs200998515." evidence="5">
    <original>E</original>
    <variation>K</variation>
    <location>
        <position position="488"/>
    </location>
</feature>
<feature type="sequence variant" id="VAR_072101" description="Does not affect enzymatic activity; dbSNP:rs115017300." evidence="22">
    <original>R</original>
    <variation>W</variation>
    <location>
        <position position="498"/>
    </location>
</feature>
<feature type="sequence variant" id="VAR_040038" description="In BCHED; seems to cause reduced expression of the protein; dbSNP:rs1741687748." evidence="38">
    <original>W</original>
    <variation>R</variation>
    <location>
        <position position="499"/>
    </location>
</feature>
<feature type="sequence variant" id="VAR_040039" description="In BCHED; dbSNP:rs769316835." evidence="11">
    <original>F</original>
    <variation>L</variation>
    <location>
        <position position="502"/>
    </location>
</feature>
<feature type="sequence variant" id="VAR_040040" description="In BCHED; allele J variant; dbSNP:rs121918556." evidence="7">
    <original>E</original>
    <variation>V</variation>
    <location>
        <position position="525"/>
    </location>
</feature>
<feature type="sequence variant" id="VAR_040041" description="In BCHED; dbSNP:rs199660374." evidence="2 37 41">
    <original>R</original>
    <variation>C</variation>
    <location>
        <position position="543"/>
    </location>
</feature>
<feature type="sequence variant" id="VAR_040042" description="In BCHED; seems to cause reduced expression of the protein." evidence="38">
    <original>Q</original>
    <variation>L</variation>
    <location>
        <position position="546"/>
    </location>
</feature>
<feature type="sequence variant" id="VAR_002364" description="In BCHED; allele K variant; with reduced enzyme activity; dbSNP:rs1803274." evidence="3 9 37 41">
    <original>A</original>
    <variation>T</variation>
    <location>
        <position position="567"/>
    </location>
</feature>
<feature type="strand" evidence="53">
    <location>
        <begin position="33"/>
        <end position="36"/>
    </location>
</feature>
<feature type="strand" evidence="53">
    <location>
        <begin position="39"/>
        <end position="42"/>
    </location>
</feature>
<feature type="strand" evidence="53">
    <location>
        <begin position="44"/>
        <end position="48"/>
    </location>
</feature>
<feature type="strand" evidence="53">
    <location>
        <begin position="51"/>
        <end position="60"/>
    </location>
</feature>
<feature type="helix" evidence="53">
    <location>
        <begin position="67"/>
        <end position="69"/>
    </location>
</feature>
<feature type="strand" evidence="53">
    <location>
        <begin position="82"/>
        <end position="85"/>
    </location>
</feature>
<feature type="helix" evidence="53">
    <location>
        <begin position="105"/>
        <end position="108"/>
    </location>
</feature>
<feature type="strand" evidence="50">
    <location>
        <begin position="116"/>
        <end position="118"/>
    </location>
</feature>
<feature type="strand" evidence="53">
    <location>
        <begin position="122"/>
        <end position="130"/>
    </location>
</feature>
<feature type="strand" evidence="53">
    <location>
        <begin position="133"/>
        <end position="141"/>
    </location>
</feature>
<feature type="turn" evidence="53">
    <location>
        <begin position="145"/>
        <end position="147"/>
    </location>
</feature>
<feature type="helix" evidence="53">
    <location>
        <begin position="154"/>
        <end position="156"/>
    </location>
</feature>
<feature type="helix" evidence="53">
    <location>
        <begin position="159"/>
        <end position="165"/>
    </location>
</feature>
<feature type="strand" evidence="53">
    <location>
        <begin position="168"/>
        <end position="172"/>
    </location>
</feature>
<feature type="helix" evidence="53">
    <location>
        <begin position="178"/>
        <end position="181"/>
    </location>
</feature>
<feature type="strand" evidence="53">
    <location>
        <begin position="190"/>
        <end position="192"/>
    </location>
</feature>
<feature type="helix" evidence="53">
    <location>
        <begin position="194"/>
        <end position="209"/>
    </location>
</feature>
<feature type="helix" evidence="53">
    <location>
        <begin position="210"/>
        <end position="213"/>
    </location>
</feature>
<feature type="strand" evidence="53">
    <location>
        <begin position="215"/>
        <end position="225"/>
    </location>
</feature>
<feature type="helix" evidence="53">
    <location>
        <begin position="227"/>
        <end position="237"/>
    </location>
</feature>
<feature type="helix" evidence="53">
    <location>
        <begin position="239"/>
        <end position="244"/>
    </location>
</feature>
<feature type="strand" evidence="53">
    <location>
        <begin position="246"/>
        <end position="252"/>
    </location>
</feature>
<feature type="turn" evidence="51">
    <location>
        <begin position="258"/>
        <end position="260"/>
    </location>
</feature>
<feature type="helix" evidence="53">
    <location>
        <begin position="264"/>
        <end position="277"/>
    </location>
</feature>
<feature type="helix" evidence="53">
    <location>
        <begin position="285"/>
        <end position="292"/>
    </location>
</feature>
<feature type="helix" evidence="53">
    <location>
        <begin position="297"/>
        <end position="304"/>
    </location>
</feature>
<feature type="helix" evidence="53">
    <location>
        <begin position="305"/>
        <end position="307"/>
    </location>
</feature>
<feature type="strand" evidence="53">
    <location>
        <begin position="308"/>
        <end position="310"/>
    </location>
</feature>
<feature type="strand" evidence="53">
    <location>
        <begin position="324"/>
        <end position="326"/>
    </location>
</feature>
<feature type="helix" evidence="53">
    <location>
        <begin position="331"/>
        <end position="336"/>
    </location>
</feature>
<feature type="strand" evidence="53">
    <location>
        <begin position="345"/>
        <end position="350"/>
    </location>
</feature>
<feature type="strand" evidence="47">
    <location>
        <begin position="352"/>
        <end position="354"/>
    </location>
</feature>
<feature type="helix" evidence="53">
    <location>
        <begin position="355"/>
        <end position="358"/>
    </location>
</feature>
<feature type="turn" evidence="53">
    <location>
        <begin position="359"/>
        <end position="361"/>
    </location>
</feature>
<feature type="strand" evidence="52">
    <location>
        <begin position="367"/>
        <end position="369"/>
    </location>
</feature>
<feature type="helix" evidence="53">
    <location>
        <begin position="375"/>
        <end position="385"/>
    </location>
</feature>
<feature type="strand" evidence="49">
    <location>
        <begin position="387"/>
        <end position="389"/>
    </location>
</feature>
<feature type="helix" evidence="53">
    <location>
        <begin position="391"/>
        <end position="401"/>
    </location>
</feature>
<feature type="turn" evidence="48">
    <location>
        <begin position="405"/>
        <end position="408"/>
    </location>
</feature>
<feature type="helix" evidence="53">
    <location>
        <begin position="412"/>
        <end position="425"/>
    </location>
</feature>
<feature type="helix" evidence="53">
    <location>
        <begin position="427"/>
        <end position="438"/>
    </location>
</feature>
<feature type="turn" evidence="53">
    <location>
        <begin position="439"/>
        <end position="441"/>
    </location>
</feature>
<feature type="strand" evidence="53">
    <location>
        <begin position="444"/>
        <end position="449"/>
    </location>
</feature>
<feature type="helix" evidence="53">
    <location>
        <begin position="460"/>
        <end position="462"/>
    </location>
</feature>
<feature type="turn" evidence="53">
    <location>
        <begin position="466"/>
        <end position="469"/>
    </location>
</feature>
<feature type="helix" evidence="53">
    <location>
        <begin position="470"/>
        <end position="473"/>
    </location>
</feature>
<feature type="helix" evidence="53">
    <location>
        <begin position="476"/>
        <end position="478"/>
    </location>
</feature>
<feature type="helix" evidence="53">
    <location>
        <begin position="480"/>
        <end position="482"/>
    </location>
</feature>
<feature type="helix" evidence="53">
    <location>
        <begin position="486"/>
        <end position="505"/>
    </location>
</feature>
<feature type="turn" evidence="53">
    <location>
        <begin position="511"/>
        <end position="514"/>
    </location>
</feature>
<feature type="turn" evidence="53">
    <location>
        <begin position="523"/>
        <end position="525"/>
    </location>
</feature>
<feature type="strand" evidence="53">
    <location>
        <begin position="527"/>
        <end position="531"/>
    </location>
</feature>
<feature type="strand" evidence="53">
    <location>
        <begin position="538"/>
        <end position="541"/>
    </location>
</feature>
<feature type="helix" evidence="53">
    <location>
        <begin position="544"/>
        <end position="551"/>
    </location>
</feature>
<feature type="helix" evidence="53">
    <location>
        <begin position="554"/>
        <end position="556"/>
    </location>
</feature>
<accession>P06276</accession>
<accession>A8K7P8</accession>
<evidence type="ECO:0000255" key="1">
    <source>
        <dbReference type="PROSITE-ProRule" id="PRU10039"/>
    </source>
</evidence>
<evidence type="ECO:0000269" key="2">
    <source>
    </source>
</evidence>
<evidence type="ECO:0000269" key="3">
    <source>
    </source>
</evidence>
<evidence type="ECO:0000269" key="4">
    <source>
    </source>
</evidence>
<evidence type="ECO:0000269" key="5">
    <source>
    </source>
</evidence>
<evidence type="ECO:0000269" key="6">
    <source>
    </source>
</evidence>
<evidence type="ECO:0000269" key="7">
    <source>
    </source>
</evidence>
<evidence type="ECO:0000269" key="8">
    <source>
    </source>
</evidence>
<evidence type="ECO:0000269" key="9">
    <source>
    </source>
</evidence>
<evidence type="ECO:0000269" key="10">
    <source>
    </source>
</evidence>
<evidence type="ECO:0000269" key="11">
    <source>
    </source>
</evidence>
<evidence type="ECO:0000269" key="12">
    <source>
    </source>
</evidence>
<evidence type="ECO:0000269" key="13">
    <source>
    </source>
</evidence>
<evidence type="ECO:0000269" key="14">
    <source>
    </source>
</evidence>
<evidence type="ECO:0000269" key="15">
    <source>
    </source>
</evidence>
<evidence type="ECO:0000269" key="16">
    <source>
    </source>
</evidence>
<evidence type="ECO:0000269" key="17">
    <source>
    </source>
</evidence>
<evidence type="ECO:0000269" key="18">
    <source>
    </source>
</evidence>
<evidence type="ECO:0000269" key="19">
    <source>
    </source>
</evidence>
<evidence type="ECO:0000269" key="20">
    <source>
    </source>
</evidence>
<evidence type="ECO:0000269" key="21">
    <source>
    </source>
</evidence>
<evidence type="ECO:0000269" key="22">
    <source>
    </source>
</evidence>
<evidence type="ECO:0000269" key="23">
    <source>
    </source>
</evidence>
<evidence type="ECO:0000269" key="24">
    <source>
    </source>
</evidence>
<evidence type="ECO:0000269" key="25">
    <source>
    </source>
</evidence>
<evidence type="ECO:0000269" key="26">
    <source>
    </source>
</evidence>
<evidence type="ECO:0000269" key="27">
    <source>
    </source>
</evidence>
<evidence type="ECO:0000269" key="28">
    <source>
    </source>
</evidence>
<evidence type="ECO:0000269" key="29">
    <source>
    </source>
</evidence>
<evidence type="ECO:0000269" key="30">
    <source>
    </source>
</evidence>
<evidence type="ECO:0000269" key="31">
    <source>
    </source>
</evidence>
<evidence type="ECO:0000269" key="32">
    <source>
    </source>
</evidence>
<evidence type="ECO:0000269" key="33">
    <source>
    </source>
</evidence>
<evidence type="ECO:0000269" key="34">
    <source>
    </source>
</evidence>
<evidence type="ECO:0000269" key="35">
    <source>
    </source>
</evidence>
<evidence type="ECO:0000269" key="36">
    <source>
    </source>
</evidence>
<evidence type="ECO:0000269" key="37">
    <source>
    </source>
</evidence>
<evidence type="ECO:0000269" key="38">
    <source>
    </source>
</evidence>
<evidence type="ECO:0000269" key="39">
    <source>
    </source>
</evidence>
<evidence type="ECO:0000269" key="40">
    <source>
    </source>
</evidence>
<evidence type="ECO:0000269" key="41">
    <source>
    </source>
</evidence>
<evidence type="ECO:0000269" key="42">
    <source>
    </source>
</evidence>
<evidence type="ECO:0000269" key="43">
    <source>
    </source>
</evidence>
<evidence type="ECO:0000269" key="44">
    <source>
    </source>
</evidence>
<evidence type="ECO:0000305" key="45"/>
<evidence type="ECO:0007744" key="46">
    <source>
        <dbReference type="PDB" id="4BDS"/>
    </source>
</evidence>
<evidence type="ECO:0007829" key="47">
    <source>
        <dbReference type="PDB" id="1P0P"/>
    </source>
</evidence>
<evidence type="ECO:0007829" key="48">
    <source>
        <dbReference type="PDB" id="2WIK"/>
    </source>
</evidence>
<evidence type="ECO:0007829" key="49">
    <source>
        <dbReference type="PDB" id="2WSL"/>
    </source>
</evidence>
<evidence type="ECO:0007829" key="50">
    <source>
        <dbReference type="PDB" id="2XMB"/>
    </source>
</evidence>
<evidence type="ECO:0007829" key="51">
    <source>
        <dbReference type="PDB" id="4BDS"/>
    </source>
</evidence>
<evidence type="ECO:0007829" key="52">
    <source>
        <dbReference type="PDB" id="6EQP"/>
    </source>
</evidence>
<evidence type="ECO:0007829" key="53">
    <source>
        <dbReference type="PDB" id="6ZWI"/>
    </source>
</evidence>
<dbReference type="EC" id="3.1.1.8"/>
<dbReference type="EMBL" id="M32391">
    <property type="protein sequence ID" value="AAA99296.1"/>
    <property type="molecule type" value="Genomic_DNA"/>
</dbReference>
<dbReference type="EMBL" id="M32389">
    <property type="protein sequence ID" value="AAA99296.1"/>
    <property type="status" value="JOINED"/>
    <property type="molecule type" value="Genomic_DNA"/>
</dbReference>
<dbReference type="EMBL" id="M32390">
    <property type="protein sequence ID" value="AAA99296.1"/>
    <property type="status" value="JOINED"/>
    <property type="molecule type" value="Genomic_DNA"/>
</dbReference>
<dbReference type="EMBL" id="M16541">
    <property type="protein sequence ID" value="AAA98113.1"/>
    <property type="molecule type" value="mRNA"/>
</dbReference>
<dbReference type="EMBL" id="M16474">
    <property type="protein sequence ID" value="AAA52015.1"/>
    <property type="molecule type" value="mRNA"/>
</dbReference>
<dbReference type="EMBL" id="AK292063">
    <property type="protein sequence ID" value="BAF84752.1"/>
    <property type="molecule type" value="mRNA"/>
</dbReference>
<dbReference type="EMBL" id="BC018141">
    <property type="protein sequence ID" value="AAH18141.1"/>
    <property type="molecule type" value="mRNA"/>
</dbReference>
<dbReference type="CCDS" id="CCDS3198.1"/>
<dbReference type="PIR" id="A33769">
    <property type="entry name" value="ACHU"/>
</dbReference>
<dbReference type="RefSeq" id="NP_000046.1">
    <property type="nucleotide sequence ID" value="NM_000055.4"/>
</dbReference>
<dbReference type="PDB" id="1P0I">
    <property type="method" value="X-ray"/>
    <property type="resolution" value="2.00 A"/>
    <property type="chains" value="A=29-557"/>
</dbReference>
<dbReference type="PDB" id="1P0M">
    <property type="method" value="X-ray"/>
    <property type="resolution" value="2.38 A"/>
    <property type="chains" value="A=29-557"/>
</dbReference>
<dbReference type="PDB" id="1P0P">
    <property type="method" value="X-ray"/>
    <property type="resolution" value="2.30 A"/>
    <property type="chains" value="A=29-557"/>
</dbReference>
<dbReference type="PDB" id="1P0Q">
    <property type="method" value="X-ray"/>
    <property type="resolution" value="2.43 A"/>
    <property type="chains" value="A=29-557"/>
</dbReference>
<dbReference type="PDB" id="1XLU">
    <property type="method" value="X-ray"/>
    <property type="resolution" value="2.20 A"/>
    <property type="chains" value="A=29-557"/>
</dbReference>
<dbReference type="PDB" id="1XLV">
    <property type="method" value="X-ray"/>
    <property type="resolution" value="2.25 A"/>
    <property type="chains" value="A=29-557"/>
</dbReference>
<dbReference type="PDB" id="1XLW">
    <property type="method" value="X-ray"/>
    <property type="resolution" value="2.10 A"/>
    <property type="chains" value="A=29-557"/>
</dbReference>
<dbReference type="PDB" id="2J4C">
    <property type="method" value="X-ray"/>
    <property type="resolution" value="2.75 A"/>
    <property type="chains" value="A=29-557"/>
</dbReference>
<dbReference type="PDB" id="2PM8">
    <property type="method" value="X-ray"/>
    <property type="resolution" value="2.80 A"/>
    <property type="chains" value="A/B=29-602"/>
</dbReference>
<dbReference type="PDB" id="2WID">
    <property type="method" value="X-ray"/>
    <property type="resolution" value="2.30 A"/>
    <property type="chains" value="A=29-557"/>
</dbReference>
<dbReference type="PDB" id="2WIF">
    <property type="method" value="X-ray"/>
    <property type="resolution" value="2.25 A"/>
    <property type="chains" value="A=29-557"/>
</dbReference>
<dbReference type="PDB" id="2WIG">
    <property type="method" value="X-ray"/>
    <property type="resolution" value="2.15 A"/>
    <property type="chains" value="A=29-557"/>
</dbReference>
<dbReference type="PDB" id="2WIJ">
    <property type="method" value="X-ray"/>
    <property type="resolution" value="2.10 A"/>
    <property type="chains" value="A=29-557"/>
</dbReference>
<dbReference type="PDB" id="2WIK">
    <property type="method" value="X-ray"/>
    <property type="resolution" value="2.10 A"/>
    <property type="chains" value="A=29-557"/>
</dbReference>
<dbReference type="PDB" id="2WIL">
    <property type="method" value="X-ray"/>
    <property type="resolution" value="3.10 A"/>
    <property type="chains" value="A/B=29-557"/>
</dbReference>
<dbReference type="PDB" id="2WSL">
    <property type="method" value="X-ray"/>
    <property type="resolution" value="2.00 A"/>
    <property type="chains" value="A=29-557"/>
</dbReference>
<dbReference type="PDB" id="2XMB">
    <property type="method" value="X-ray"/>
    <property type="resolution" value="2.10 A"/>
    <property type="chains" value="A=29-557"/>
</dbReference>
<dbReference type="PDB" id="2XMC">
    <property type="method" value="X-ray"/>
    <property type="resolution" value="2.40 A"/>
    <property type="chains" value="A=29-557"/>
</dbReference>
<dbReference type="PDB" id="2XMD">
    <property type="method" value="X-ray"/>
    <property type="resolution" value="2.30 A"/>
    <property type="chains" value="A=29-557"/>
</dbReference>
<dbReference type="PDB" id="2XMG">
    <property type="method" value="X-ray"/>
    <property type="resolution" value="2.70 A"/>
    <property type="chains" value="A=29-557"/>
</dbReference>
<dbReference type="PDB" id="2XQF">
    <property type="method" value="X-ray"/>
    <property type="resolution" value="2.10 A"/>
    <property type="chains" value="A=31-557"/>
</dbReference>
<dbReference type="PDB" id="2XQG">
    <property type="method" value="X-ray"/>
    <property type="resolution" value="2.30 A"/>
    <property type="chains" value="A=31-557"/>
</dbReference>
<dbReference type="PDB" id="2XQI">
    <property type="method" value="X-ray"/>
    <property type="resolution" value="2.60 A"/>
    <property type="chains" value="A=31-557"/>
</dbReference>
<dbReference type="PDB" id="2XQJ">
    <property type="method" value="X-ray"/>
    <property type="resolution" value="2.40 A"/>
    <property type="chains" value="A=31-557"/>
</dbReference>
<dbReference type="PDB" id="2XQK">
    <property type="method" value="X-ray"/>
    <property type="resolution" value="2.40 A"/>
    <property type="chains" value="A=31-557"/>
</dbReference>
<dbReference type="PDB" id="2Y1K">
    <property type="method" value="X-ray"/>
    <property type="resolution" value="2.50 A"/>
    <property type="chains" value="A=29-557"/>
</dbReference>
<dbReference type="PDB" id="3DJY">
    <property type="method" value="X-ray"/>
    <property type="resolution" value="2.10 A"/>
    <property type="chains" value="A=29-557"/>
</dbReference>
<dbReference type="PDB" id="3DKK">
    <property type="method" value="X-ray"/>
    <property type="resolution" value="2.31 A"/>
    <property type="chains" value="A=29-557"/>
</dbReference>
<dbReference type="PDB" id="3O9M">
    <property type="method" value="X-ray"/>
    <property type="resolution" value="2.98 A"/>
    <property type="chains" value="A/B=29-602"/>
</dbReference>
<dbReference type="PDB" id="4AQD">
    <property type="method" value="X-ray"/>
    <property type="resolution" value="2.50 A"/>
    <property type="chains" value="A/B=29-557"/>
</dbReference>
<dbReference type="PDB" id="4AXB">
    <property type="method" value="X-ray"/>
    <property type="resolution" value="2.40 A"/>
    <property type="chains" value="A=31-557"/>
</dbReference>
<dbReference type="PDB" id="4B0O">
    <property type="method" value="X-ray"/>
    <property type="resolution" value="2.35 A"/>
    <property type="chains" value="A=29-557"/>
</dbReference>
<dbReference type="PDB" id="4B0P">
    <property type="method" value="X-ray"/>
    <property type="resolution" value="2.50 A"/>
    <property type="chains" value="A=29-557"/>
</dbReference>
<dbReference type="PDB" id="4BBZ">
    <property type="method" value="X-ray"/>
    <property type="resolution" value="2.70 A"/>
    <property type="chains" value="A=29-557"/>
</dbReference>
<dbReference type="PDB" id="4BDS">
    <property type="method" value="X-ray"/>
    <property type="resolution" value="2.10 A"/>
    <property type="chains" value="A=29-557"/>
</dbReference>
<dbReference type="PDB" id="4TPK">
    <property type="method" value="X-ray"/>
    <property type="resolution" value="2.70 A"/>
    <property type="chains" value="A/B=1-602"/>
</dbReference>
<dbReference type="PDB" id="4XII">
    <property type="method" value="X-ray"/>
    <property type="resolution" value="2.70 A"/>
    <property type="chains" value="A/B=29-572"/>
</dbReference>
<dbReference type="PDB" id="5DYT">
    <property type="method" value="X-ray"/>
    <property type="resolution" value="2.55 A"/>
    <property type="chains" value="A/B=28-557"/>
</dbReference>
<dbReference type="PDB" id="5DYW">
    <property type="method" value="X-ray"/>
    <property type="resolution" value="2.50 A"/>
    <property type="chains" value="A/B=28-557"/>
</dbReference>
<dbReference type="PDB" id="5DYY">
    <property type="method" value="X-ray"/>
    <property type="resolution" value="2.65 A"/>
    <property type="chains" value="A/B=28-557"/>
</dbReference>
<dbReference type="PDB" id="5K5E">
    <property type="method" value="X-ray"/>
    <property type="resolution" value="2.80 A"/>
    <property type="chains" value="A/B=29-557"/>
</dbReference>
<dbReference type="PDB" id="5LKR">
    <property type="method" value="X-ray"/>
    <property type="resolution" value="2.52 A"/>
    <property type="chains" value="A/B=29-602"/>
</dbReference>
<dbReference type="PDB" id="5NN0">
    <property type="method" value="X-ray"/>
    <property type="resolution" value="2.10 A"/>
    <property type="chains" value="A=29-557"/>
</dbReference>
<dbReference type="PDB" id="6EMI">
    <property type="method" value="X-ray"/>
    <property type="resolution" value="2.48 A"/>
    <property type="chains" value="A/B=29-557"/>
</dbReference>
<dbReference type="PDB" id="6EP4">
    <property type="method" value="X-ray"/>
    <property type="resolution" value="2.30 A"/>
    <property type="chains" value="A=29-557"/>
</dbReference>
<dbReference type="PDB" id="6EQP">
    <property type="method" value="X-ray"/>
    <property type="resolution" value="2.35 A"/>
    <property type="chains" value="A=29-557"/>
</dbReference>
<dbReference type="PDB" id="6EQQ">
    <property type="method" value="X-ray"/>
    <property type="resolution" value="2.40 A"/>
    <property type="chains" value="A=29-557"/>
</dbReference>
<dbReference type="PDB" id="6ESJ">
    <property type="method" value="X-ray"/>
    <property type="resolution" value="2.98 A"/>
    <property type="chains" value="A/B=29-557"/>
</dbReference>
<dbReference type="PDB" id="6ESY">
    <property type="method" value="X-ray"/>
    <property type="resolution" value="2.80 A"/>
    <property type="chains" value="A/B=29-557"/>
</dbReference>
<dbReference type="PDB" id="6EYF">
    <property type="method" value="X-ray"/>
    <property type="resolution" value="2.60 A"/>
    <property type="chains" value="A=31-557"/>
</dbReference>
<dbReference type="PDB" id="6EZ2">
    <property type="method" value="X-ray"/>
    <property type="resolution" value="2.70 A"/>
    <property type="chains" value="A/B=31-557"/>
</dbReference>
<dbReference type="PDB" id="6F7Q">
    <property type="method" value="X-ray"/>
    <property type="resolution" value="2.60 A"/>
    <property type="chains" value="A/B=29-557"/>
</dbReference>
<dbReference type="PDB" id="6I0B">
    <property type="method" value="X-ray"/>
    <property type="resolution" value="2.38 A"/>
    <property type="chains" value="A=29-557"/>
</dbReference>
<dbReference type="PDB" id="6I0C">
    <property type="method" value="X-ray"/>
    <property type="resolution" value="2.67 A"/>
    <property type="chains" value="A=29-557"/>
</dbReference>
<dbReference type="PDB" id="6I2T">
    <property type="method" value="EM"/>
    <property type="resolution" value="5.70 A"/>
    <property type="chains" value="A/B/C/D=29-602"/>
</dbReference>
<dbReference type="PDB" id="6QAA">
    <property type="method" value="X-ray"/>
    <property type="resolution" value="1.90 A"/>
    <property type="chains" value="A=1-557"/>
</dbReference>
<dbReference type="PDB" id="6QAB">
    <property type="method" value="X-ray"/>
    <property type="resolution" value="2.49 A"/>
    <property type="chains" value="A=1-557"/>
</dbReference>
<dbReference type="PDB" id="6QAC">
    <property type="method" value="X-ray"/>
    <property type="resolution" value="2.77 A"/>
    <property type="chains" value="A=1-557"/>
</dbReference>
<dbReference type="PDB" id="6QAD">
    <property type="method" value="X-ray"/>
    <property type="resolution" value="2.50 A"/>
    <property type="chains" value="A=1-557"/>
</dbReference>
<dbReference type="PDB" id="6QAE">
    <property type="method" value="X-ray"/>
    <property type="resolution" value="2.49 A"/>
    <property type="chains" value="A=1-557"/>
</dbReference>
<dbReference type="PDB" id="6R6V">
    <property type="method" value="X-ray"/>
    <property type="resolution" value="2.50 A"/>
    <property type="chains" value="A=32-557"/>
</dbReference>
<dbReference type="PDB" id="6R6W">
    <property type="method" value="X-ray"/>
    <property type="resolution" value="2.47 A"/>
    <property type="chains" value="A=32-557"/>
</dbReference>
<dbReference type="PDB" id="6RUA">
    <property type="method" value="X-ray"/>
    <property type="resolution" value="2.75 A"/>
    <property type="chains" value="A/B=29-602"/>
</dbReference>
<dbReference type="PDB" id="6SAM">
    <property type="method" value="X-ray"/>
    <property type="resolution" value="2.50 A"/>
    <property type="chains" value="A=29-557"/>
</dbReference>
<dbReference type="PDB" id="6T9P">
    <property type="method" value="X-ray"/>
    <property type="resolution" value="2.70 A"/>
    <property type="chains" value="A=29-557"/>
</dbReference>
<dbReference type="PDB" id="6T9S">
    <property type="method" value="X-ray"/>
    <property type="resolution" value="2.70 A"/>
    <property type="chains" value="A=29-557"/>
</dbReference>
<dbReference type="PDB" id="6XTA">
    <property type="method" value="X-ray"/>
    <property type="resolution" value="2.50 A"/>
    <property type="chains" value="A=29-557"/>
</dbReference>
<dbReference type="PDB" id="6ZWI">
    <property type="method" value="X-ray"/>
    <property type="resolution" value="1.85 A"/>
    <property type="chains" value="A=29-557"/>
</dbReference>
<dbReference type="PDB" id="7AIY">
    <property type="method" value="X-ray"/>
    <property type="resolution" value="2.94 A"/>
    <property type="chains" value="A/B=1-602"/>
</dbReference>
<dbReference type="PDB" id="7AMZ">
    <property type="method" value="X-ray"/>
    <property type="resolution" value="2.25 A"/>
    <property type="chains" value="A=29-557"/>
</dbReference>
<dbReference type="PDB" id="7AWG">
    <property type="method" value="X-ray"/>
    <property type="resolution" value="2.00 A"/>
    <property type="chains" value="A=29-557"/>
</dbReference>
<dbReference type="PDB" id="7AWH">
    <property type="method" value="X-ray"/>
    <property type="resolution" value="2.30 A"/>
    <property type="chains" value="A=29-557"/>
</dbReference>
<dbReference type="PDB" id="7AWI">
    <property type="method" value="X-ray"/>
    <property type="resolution" value="2.30 A"/>
    <property type="chains" value="A=29-557"/>
</dbReference>
<dbReference type="PDB" id="7BGC">
    <property type="method" value="X-ray"/>
    <property type="resolution" value="2.40 A"/>
    <property type="chains" value="A=29-557"/>
</dbReference>
<dbReference type="PDB" id="7BO3">
    <property type="method" value="X-ray"/>
    <property type="resolution" value="2.20 A"/>
    <property type="chains" value="A=29-557"/>
</dbReference>
<dbReference type="PDB" id="7BO4">
    <property type="method" value="X-ray"/>
    <property type="resolution" value="2.40 A"/>
    <property type="chains" value="A=29-557"/>
</dbReference>
<dbReference type="PDB" id="7Q1M">
    <property type="method" value="X-ray"/>
    <property type="resolution" value="2.79 A"/>
    <property type="chains" value="A=29-557"/>
</dbReference>
<dbReference type="PDB" id="7Q1N">
    <property type="method" value="X-ray"/>
    <property type="resolution" value="2.35 A"/>
    <property type="chains" value="A=29-557"/>
</dbReference>
<dbReference type="PDB" id="7Q1O">
    <property type="method" value="X-ray"/>
    <property type="resolution" value="2.65 A"/>
    <property type="chains" value="A=29-557"/>
</dbReference>
<dbReference type="PDB" id="7Q1P">
    <property type="method" value="X-ray"/>
    <property type="resolution" value="2.35 A"/>
    <property type="chains" value="A=29-557"/>
</dbReference>
<dbReference type="PDB" id="7QBQ">
    <property type="method" value="X-ray"/>
    <property type="resolution" value="2.49 A"/>
    <property type="chains" value="A=29-557"/>
</dbReference>
<dbReference type="PDB" id="7QBR">
    <property type="method" value="X-ray"/>
    <property type="resolution" value="2.13 A"/>
    <property type="chains" value="A=29-557"/>
</dbReference>
<dbReference type="PDB" id="7QHD">
    <property type="method" value="X-ray"/>
    <property type="resolution" value="2.04 A"/>
    <property type="chains" value="A=29-557"/>
</dbReference>
<dbReference type="PDB" id="7QHE">
    <property type="method" value="X-ray"/>
    <property type="resolution" value="2.47 A"/>
    <property type="chains" value="A=29-557"/>
</dbReference>
<dbReference type="PDB" id="7ZPB">
    <property type="method" value="X-ray"/>
    <property type="resolution" value="2.31 A"/>
    <property type="chains" value="A=29-557"/>
</dbReference>
<dbReference type="PDB" id="8AI7">
    <property type="method" value="X-ray"/>
    <property type="resolution" value="2.13 A"/>
    <property type="chains" value="F=29-557"/>
</dbReference>
<dbReference type="PDB" id="8AM1">
    <property type="method" value="X-ray"/>
    <property type="resolution" value="2.53 A"/>
    <property type="chains" value="A=29-557"/>
</dbReference>
<dbReference type="PDB" id="8AM2">
    <property type="method" value="X-ray"/>
    <property type="resolution" value="2.50 A"/>
    <property type="chains" value="A=29-557"/>
</dbReference>
<dbReference type="PDB" id="8CGO">
    <property type="method" value="X-ray"/>
    <property type="resolution" value="2.65 A"/>
    <property type="chains" value="A=29-557"/>
</dbReference>
<dbReference type="PDB" id="8QTW">
    <property type="method" value="X-ray"/>
    <property type="resolution" value="2.24 A"/>
    <property type="chains" value="A=29-557"/>
</dbReference>
<dbReference type="PDB" id="8QTX">
    <property type="method" value="X-ray"/>
    <property type="resolution" value="2.12 A"/>
    <property type="chains" value="A=29-557"/>
</dbReference>
<dbReference type="PDB" id="9EWU">
    <property type="method" value="X-ray"/>
    <property type="resolution" value="2.45 A"/>
    <property type="chains" value="A=29-557"/>
</dbReference>
<dbReference type="PDBsum" id="1P0I"/>
<dbReference type="PDBsum" id="1P0M"/>
<dbReference type="PDBsum" id="1P0P"/>
<dbReference type="PDBsum" id="1P0Q"/>
<dbReference type="PDBsum" id="1XLU"/>
<dbReference type="PDBsum" id="1XLV"/>
<dbReference type="PDBsum" id="1XLW"/>
<dbReference type="PDBsum" id="2J4C"/>
<dbReference type="PDBsum" id="2PM8"/>
<dbReference type="PDBsum" id="2WID"/>
<dbReference type="PDBsum" id="2WIF"/>
<dbReference type="PDBsum" id="2WIG"/>
<dbReference type="PDBsum" id="2WIJ"/>
<dbReference type="PDBsum" id="2WIK"/>
<dbReference type="PDBsum" id="2WIL"/>
<dbReference type="PDBsum" id="2WSL"/>
<dbReference type="PDBsum" id="2XMB"/>
<dbReference type="PDBsum" id="2XMC"/>
<dbReference type="PDBsum" id="2XMD"/>
<dbReference type="PDBsum" id="2XMG"/>
<dbReference type="PDBsum" id="2XQF"/>
<dbReference type="PDBsum" id="2XQG"/>
<dbReference type="PDBsum" id="2XQI"/>
<dbReference type="PDBsum" id="2XQJ"/>
<dbReference type="PDBsum" id="2XQK"/>
<dbReference type="PDBsum" id="2Y1K"/>
<dbReference type="PDBsum" id="3DJY"/>
<dbReference type="PDBsum" id="3DKK"/>
<dbReference type="PDBsum" id="3O9M"/>
<dbReference type="PDBsum" id="4AQD"/>
<dbReference type="PDBsum" id="4AXB"/>
<dbReference type="PDBsum" id="4B0O"/>
<dbReference type="PDBsum" id="4B0P"/>
<dbReference type="PDBsum" id="4BBZ"/>
<dbReference type="PDBsum" id="4BDS"/>
<dbReference type="PDBsum" id="4TPK"/>
<dbReference type="PDBsum" id="4XII"/>
<dbReference type="PDBsum" id="5DYT"/>
<dbReference type="PDBsum" id="5DYW"/>
<dbReference type="PDBsum" id="5DYY"/>
<dbReference type="PDBsum" id="5K5E"/>
<dbReference type="PDBsum" id="5LKR"/>
<dbReference type="PDBsum" id="5NN0"/>
<dbReference type="PDBsum" id="6EMI"/>
<dbReference type="PDBsum" id="6EP4"/>
<dbReference type="PDBsum" id="6EQP"/>
<dbReference type="PDBsum" id="6EQQ"/>
<dbReference type="PDBsum" id="6ESJ"/>
<dbReference type="PDBsum" id="6ESY"/>
<dbReference type="PDBsum" id="6EYF"/>
<dbReference type="PDBsum" id="6EZ2"/>
<dbReference type="PDBsum" id="6F7Q"/>
<dbReference type="PDBsum" id="6I0B"/>
<dbReference type="PDBsum" id="6I0C"/>
<dbReference type="PDBsum" id="6I2T"/>
<dbReference type="PDBsum" id="6QAA"/>
<dbReference type="PDBsum" id="6QAB"/>
<dbReference type="PDBsum" id="6QAC"/>
<dbReference type="PDBsum" id="6QAD"/>
<dbReference type="PDBsum" id="6QAE"/>
<dbReference type="PDBsum" id="6R6V"/>
<dbReference type="PDBsum" id="6R6W"/>
<dbReference type="PDBsum" id="6RUA"/>
<dbReference type="PDBsum" id="6SAM"/>
<dbReference type="PDBsum" id="6T9P"/>
<dbReference type="PDBsum" id="6T9S"/>
<dbReference type="PDBsum" id="6XTA"/>
<dbReference type="PDBsum" id="6ZWI"/>
<dbReference type="PDBsum" id="7AIY"/>
<dbReference type="PDBsum" id="7AMZ"/>
<dbReference type="PDBsum" id="7AWG"/>
<dbReference type="PDBsum" id="7AWH"/>
<dbReference type="PDBsum" id="7AWI"/>
<dbReference type="PDBsum" id="7BGC"/>
<dbReference type="PDBsum" id="7BO3"/>
<dbReference type="PDBsum" id="7BO4"/>
<dbReference type="PDBsum" id="7Q1M"/>
<dbReference type="PDBsum" id="7Q1N"/>
<dbReference type="PDBsum" id="7Q1O"/>
<dbReference type="PDBsum" id="7Q1P"/>
<dbReference type="PDBsum" id="7QBQ"/>
<dbReference type="PDBsum" id="7QBR"/>
<dbReference type="PDBsum" id="7QHD"/>
<dbReference type="PDBsum" id="7QHE"/>
<dbReference type="PDBsum" id="7ZPB"/>
<dbReference type="PDBsum" id="8AI7"/>
<dbReference type="PDBsum" id="8AM1"/>
<dbReference type="PDBsum" id="8AM2"/>
<dbReference type="PDBsum" id="8CGO"/>
<dbReference type="PDBsum" id="8QTW"/>
<dbReference type="PDBsum" id="8QTX"/>
<dbReference type="PDBsum" id="9EWU"/>
<dbReference type="EMDB" id="EMD-0256"/>
<dbReference type="EMDB" id="EMD-4400"/>
<dbReference type="SMR" id="P06276"/>
<dbReference type="BioGRID" id="107064">
    <property type="interactions" value="65"/>
</dbReference>
<dbReference type="CORUM" id="P06276"/>
<dbReference type="DIP" id="DIP-46476N"/>
<dbReference type="FunCoup" id="P06276">
    <property type="interactions" value="274"/>
</dbReference>
<dbReference type="IntAct" id="P06276">
    <property type="interactions" value="67"/>
</dbReference>
<dbReference type="MINT" id="P06276"/>
<dbReference type="STRING" id="9606.ENSP00000264381"/>
<dbReference type="BindingDB" id="P06276"/>
<dbReference type="ChEMBL" id="CHEMBL1914"/>
<dbReference type="DrugBank" id="DB08200">
    <property type="generic name" value="(1R)-menthyl hexyl phosphonate group"/>
</dbReference>
<dbReference type="DrugBank" id="DB08201">
    <property type="generic name" value="(1S)-menthyl hexyl phosphonate group"/>
</dbReference>
<dbReference type="DrugBank" id="DB03814">
    <property type="generic name" value="2-(N-morpholino)ethanesulfonic acid"/>
</dbReference>
<dbReference type="DrugBank" id="DB07940">
    <property type="generic name" value="9-(3-IODOBENZYLAMINO)-1,2,3,4-TETRAHYDROACRIDINE"/>
</dbReference>
<dbReference type="DrugBank" id="DB03672">
    <property type="generic name" value="9-N-Phenylmethylamino-Tacrine"/>
</dbReference>
<dbReference type="DrugBank" id="DB03128">
    <property type="generic name" value="Acetylcholine"/>
</dbReference>
<dbReference type="DrugBank" id="DB08897">
    <property type="generic name" value="Aclidinium"/>
</dbReference>
<dbReference type="DrugBank" id="DB01122">
    <property type="generic name" value="Ambenonium"/>
</dbReference>
<dbReference type="DrugBank" id="DB06692">
    <property type="generic name" value="Aprotinin"/>
</dbReference>
<dbReference type="DrugBank" id="DB01408">
    <property type="generic name" value="Bambuterol"/>
</dbReference>
<dbReference type="DrugBank" id="DB19353">
    <property type="generic name" value="Benzgalantamine"/>
</dbReference>
<dbReference type="DrugBank" id="DB00868">
    <property type="generic name" value="Benzonatate"/>
</dbReference>
<dbReference type="DrugBank" id="DB06756">
    <property type="generic name" value="Betaine"/>
</dbReference>
<dbReference type="DrugBank" id="DB11148">
    <property type="generic name" value="Butamben"/>
</dbReference>
<dbReference type="DrugBank" id="DB03568">
    <property type="generic name" value="Butyric Acid"/>
</dbReference>
<dbReference type="DrugBank" id="DB04250">
    <property type="generic name" value="Butyrylthiocholine"/>
</dbReference>
<dbReference type="DrugBank" id="DB06774">
    <property type="generic name" value="Capsaicin"/>
</dbReference>
<dbReference type="DrugBank" id="DB01161">
    <property type="generic name" value="Chloroprocaine"/>
</dbReference>
<dbReference type="DrugBank" id="DB00856">
    <property type="generic name" value="Chlorphenesin"/>
</dbReference>
<dbReference type="DrugBank" id="DB00477">
    <property type="generic name" value="Chlorpromazine"/>
</dbReference>
<dbReference type="DrugBank" id="DB00122">
    <property type="generic name" value="Choline"/>
</dbReference>
<dbReference type="DrugBank" id="DB14006">
    <property type="generic name" value="Choline salicylate"/>
</dbReference>
<dbReference type="DrugBank" id="DB00527">
    <property type="generic name" value="Cinchocaine"/>
</dbReference>
<dbReference type="DrugBank" id="DB00515">
    <property type="generic name" value="Cisplatin"/>
</dbReference>
<dbReference type="DrugBank" id="DB04920">
    <property type="generic name" value="Clevidipine"/>
</dbReference>
<dbReference type="DrugBank" id="DB00907">
    <property type="generic name" value="Cocaine"/>
</dbReference>
<dbReference type="DrugBank" id="DB00979">
    <property type="generic name" value="Cyclopentolate"/>
</dbReference>
<dbReference type="DrugBank" id="DB01245">
    <property type="generic name" value="Decamethonium"/>
</dbReference>
<dbReference type="DrugBank" id="DB00944">
    <property type="generic name" value="Demecarium"/>
</dbReference>
<dbReference type="DrugBank" id="DB11397">
    <property type="generic name" value="Dichlorvos"/>
</dbReference>
<dbReference type="DrugBank" id="DB02811">
    <property type="generic name" value="Diethyl phosphonate"/>
</dbReference>
<dbReference type="DrugBank" id="DB00711">
    <property type="generic name" value="Diethylcarbamazine"/>
</dbReference>
<dbReference type="DrugBank" id="DB00449">
    <property type="generic name" value="Dipivefrin"/>
</dbReference>
<dbReference type="DrugBank" id="DB07681">
    <property type="generic name" value="DODECANESULFONATE ION"/>
</dbReference>
<dbReference type="DrugBank" id="DB00843">
    <property type="generic name" value="Donepezil"/>
</dbReference>
<dbReference type="DrugBank" id="DB01135">
    <property type="generic name" value="Doxacurium"/>
</dbReference>
<dbReference type="DrugBank" id="DB01057">
    <property type="generic name" value="Echothiophate"/>
</dbReference>
<dbReference type="DrugBank" id="DB01010">
    <property type="generic name" value="Edrophonium"/>
</dbReference>
<dbReference type="DrugBank" id="DB01364">
    <property type="generic name" value="Ephedrine"/>
</dbReference>
<dbReference type="DrugBank" id="DB03822">
    <property type="generic name" value="Ethyl dihydrogen phosphate"/>
</dbReference>
<dbReference type="DrugBank" id="DB08658">
    <property type="generic name" value="Ethyl hydrogen diethylamidophosphate"/>
</dbReference>
<dbReference type="DrugBank" id="DB00674">
    <property type="generic name" value="Galantamine"/>
</dbReference>
<dbReference type="DrugBank" id="DB00941">
    <property type="generic name" value="Hexafluronium"/>
</dbReference>
<dbReference type="DrugBank" id="DB06636">
    <property type="generic name" value="Isavuconazonium"/>
</dbReference>
<dbReference type="DrugBank" id="DB00677">
    <property type="generic name" value="Isoflurophate"/>
</dbReference>
<dbReference type="DrugBank" id="DB01064">
    <property type="generic name" value="Isoprenaline"/>
</dbReference>
<dbReference type="DrugBank" id="DB01221">
    <property type="generic name" value="Ketamine"/>
</dbReference>
<dbReference type="DrugBank" id="DB00772">
    <property type="generic name" value="Malathion"/>
</dbReference>
<dbReference type="DrugBank" id="DB00888">
    <property type="generic name" value="Mechlorethamine"/>
</dbReference>
<dbReference type="DrugBank" id="DB00358">
    <property type="generic name" value="Mefloquine"/>
</dbReference>
<dbReference type="DrugBank" id="DB13478">
    <property type="generic name" value="Meptazinol"/>
</dbReference>
<dbReference type="DrugBank" id="DB02845">
    <property type="generic name" value="Methylphosphinic Acid"/>
</dbReference>
<dbReference type="DrugBank" id="DB08893">
    <property type="generic name" value="Mirabegron"/>
</dbReference>
<dbReference type="DrugBank" id="DB01226">
    <property type="generic name" value="Mivacurium"/>
</dbReference>
<dbReference type="DrugBank" id="DB09205">
    <property type="generic name" value="Moxisylyte"/>
</dbReference>
<dbReference type="DrugBank" id="DB01400">
    <property type="generic name" value="Neostigmine"/>
</dbReference>
<dbReference type="DrugBank" id="DB00585">
    <property type="generic name" value="Nizatidine"/>
</dbReference>
<dbReference type="DrugBank" id="DB00892">
    <property type="generic name" value="Oxybuprocaine"/>
</dbReference>
<dbReference type="DrugBank" id="DB01337">
    <property type="generic name" value="Pancuronium"/>
</dbReference>
<dbReference type="DrugBank" id="DB00082">
    <property type="generic name" value="Pegvisomant"/>
</dbReference>
<dbReference type="DrugBank" id="DB00183">
    <property type="generic name" value="Pentagastrin"/>
</dbReference>
<dbReference type="DrugBank" id="DB00790">
    <property type="generic name" value="Perindopril"/>
</dbReference>
<dbReference type="DrugBank" id="DB04892">
    <property type="generic name" value="Phenserine"/>
</dbReference>
<dbReference type="DrugBank" id="DB03976">
    <property type="generic name" value="Phosphorylisopropane"/>
</dbReference>
<dbReference type="DrugBank" id="DB01338">
    <property type="generic name" value="Pipecuronium"/>
</dbReference>
<dbReference type="DrugBank" id="DB00733">
    <property type="generic name" value="Pralidoxime"/>
</dbReference>
<dbReference type="DrugBank" id="DB01035">
    <property type="generic name" value="Procainamide"/>
</dbReference>
<dbReference type="DrugBank" id="DB00721">
    <property type="generic name" value="Procaine"/>
</dbReference>
<dbReference type="DrugBank" id="DB00392">
    <property type="generic name" value="Profenamine"/>
</dbReference>
<dbReference type="DrugBank" id="DB09288">
    <property type="generic name" value="Propacetamol"/>
</dbReference>
<dbReference type="DrugBank" id="DB00545">
    <property type="generic name" value="Pyridostigmine"/>
</dbReference>
<dbReference type="DrugBank" id="DB00178">
    <property type="generic name" value="Ramipril"/>
</dbReference>
<dbReference type="DrugBank" id="DB05386">
    <property type="generic name" value="Regramostim"/>
</dbReference>
<dbReference type="DrugBank" id="DB00989">
    <property type="generic name" value="Rivastigmine"/>
</dbReference>
<dbReference type="DrugBank" id="DB05875">
    <property type="generic name" value="Sar9, Met (O2)11-Substance P"/>
</dbReference>
<dbReference type="DrugBank" id="DB00202">
    <property type="generic name" value="Succinylcholine"/>
</dbReference>
<dbReference type="DrugBank" id="DB00391">
    <property type="generic name" value="Sulpiride"/>
</dbReference>
<dbReference type="DrugBank" id="DB00382">
    <property type="generic name" value="Tacrine"/>
</dbReference>
<dbReference type="DrugBank" id="DB00871">
    <property type="generic name" value="Terbutaline"/>
</dbReference>
<dbReference type="DrugBank" id="DB04572">
    <property type="generic name" value="Thiotepa"/>
</dbReference>
<dbReference type="DrugBank" id="DB14031">
    <property type="generic name" value="Tretamine"/>
</dbReference>
<dbReference type="DrugBank" id="DB00620">
    <property type="generic name" value="Triamcinolone"/>
</dbReference>
<dbReference type="DrugBank" id="DB00508">
    <property type="generic name" value="Triflupromazine"/>
</dbReference>
<dbReference type="DrugBank" id="DB01116">
    <property type="generic name" value="Trimethaphan"/>
</dbReference>
<dbReference type="DrugBank" id="DB01199">
    <property type="generic name" value="Tubocurarine"/>
</dbReference>
<dbReference type="DrugCentral" id="P06276"/>
<dbReference type="GuidetoPHARMACOLOGY" id="2471"/>
<dbReference type="ESTHER" id="human-BCHE">
    <property type="family name" value="BCHE"/>
</dbReference>
<dbReference type="MEROPS" id="S09.980"/>
<dbReference type="GlyConnect" id="1109">
    <property type="glycosylation" value="12 N-Linked glycans (4 sites)"/>
</dbReference>
<dbReference type="GlyCosmos" id="P06276">
    <property type="glycosylation" value="10 sites, 12 glycans"/>
</dbReference>
<dbReference type="GlyGen" id="P06276">
    <property type="glycosylation" value="15 sites, 38 N-linked glycans (8 sites), 1 O-linked glycan (1 site)"/>
</dbReference>
<dbReference type="iPTMnet" id="P06276"/>
<dbReference type="PhosphoSitePlus" id="P06276"/>
<dbReference type="SwissPalm" id="P06276"/>
<dbReference type="BioMuta" id="BCHE"/>
<dbReference type="DMDM" id="116353"/>
<dbReference type="CPTAC" id="non-CPTAC-2645"/>
<dbReference type="jPOST" id="P06276"/>
<dbReference type="MassIVE" id="P06276"/>
<dbReference type="PaxDb" id="9606-ENSP00000264381"/>
<dbReference type="PeptideAtlas" id="P06276"/>
<dbReference type="ProteomicsDB" id="51880"/>
<dbReference type="ABCD" id="P06276">
    <property type="antibodies" value="4 sequenced antibodies"/>
</dbReference>
<dbReference type="Antibodypedia" id="879">
    <property type="antibodies" value="450 antibodies from 41 providers"/>
</dbReference>
<dbReference type="DNASU" id="590"/>
<dbReference type="Ensembl" id="ENST00000264381.8">
    <property type="protein sequence ID" value="ENSP00000264381.3"/>
    <property type="gene ID" value="ENSG00000114200.10"/>
</dbReference>
<dbReference type="GeneID" id="590"/>
<dbReference type="KEGG" id="hsa:590"/>
<dbReference type="MANE-Select" id="ENST00000264381.8">
    <property type="protein sequence ID" value="ENSP00000264381.3"/>
    <property type="RefSeq nucleotide sequence ID" value="NM_000055.4"/>
    <property type="RefSeq protein sequence ID" value="NP_000046.1"/>
</dbReference>
<dbReference type="UCSC" id="uc003fem.5">
    <property type="organism name" value="human"/>
</dbReference>
<dbReference type="AGR" id="HGNC:983"/>
<dbReference type="CTD" id="590"/>
<dbReference type="DisGeNET" id="590"/>
<dbReference type="GeneCards" id="BCHE"/>
<dbReference type="HGNC" id="HGNC:983">
    <property type="gene designation" value="BCHE"/>
</dbReference>
<dbReference type="HPA" id="ENSG00000114200">
    <property type="expression patterns" value="Tissue enriched (liver)"/>
</dbReference>
<dbReference type="MalaCards" id="BCHE"/>
<dbReference type="MIM" id="177400">
    <property type="type" value="gene"/>
</dbReference>
<dbReference type="MIM" id="617936">
    <property type="type" value="phenotype"/>
</dbReference>
<dbReference type="neXtProt" id="NX_P06276"/>
<dbReference type="OpenTargets" id="ENSG00000114200"/>
<dbReference type="Orphanet" id="132">
    <property type="disease" value="Hereditary butyrylcholinesterase deficiency"/>
</dbReference>
<dbReference type="PharmGKB" id="PA25294"/>
<dbReference type="VEuPathDB" id="HostDB:ENSG00000114200"/>
<dbReference type="eggNOG" id="KOG4389">
    <property type="taxonomic scope" value="Eukaryota"/>
</dbReference>
<dbReference type="GeneTree" id="ENSGT00940000157023"/>
<dbReference type="InParanoid" id="P06276"/>
<dbReference type="OMA" id="YICPGID"/>
<dbReference type="OrthoDB" id="9000293at2759"/>
<dbReference type="PAN-GO" id="P06276">
    <property type="GO annotations" value="5 GO annotations based on evolutionary models"/>
</dbReference>
<dbReference type="PhylomeDB" id="P06276"/>
<dbReference type="TreeFam" id="TF315470"/>
<dbReference type="BRENDA" id="3.1.1.8">
    <property type="organism ID" value="2681"/>
</dbReference>
<dbReference type="PathwayCommons" id="P06276"/>
<dbReference type="Reactome" id="R-HSA-112311">
    <property type="pathway name" value="Neurotransmitter clearance"/>
</dbReference>
<dbReference type="Reactome" id="R-HSA-1483191">
    <property type="pathway name" value="Synthesis of PC"/>
</dbReference>
<dbReference type="Reactome" id="R-HSA-422085">
    <property type="pathway name" value="Synthesis, secretion, and deacylation of Ghrelin"/>
</dbReference>
<dbReference type="Reactome" id="R-HSA-9749641">
    <property type="pathway name" value="Aspirin ADME"/>
</dbReference>
<dbReference type="SABIO-RK" id="P06276"/>
<dbReference type="SignaLink" id="P06276"/>
<dbReference type="SIGNOR" id="P06276"/>
<dbReference type="BioGRID-ORCS" id="590">
    <property type="hits" value="14 hits in 1167 CRISPR screens"/>
</dbReference>
<dbReference type="ChiTaRS" id="BCHE">
    <property type="organism name" value="human"/>
</dbReference>
<dbReference type="EvolutionaryTrace" id="P06276"/>
<dbReference type="GeneWiki" id="Butyrylcholinesterase"/>
<dbReference type="GenomeRNAi" id="590"/>
<dbReference type="Pharos" id="P06276">
    <property type="development level" value="Tclin"/>
</dbReference>
<dbReference type="PRO" id="PR:P06276"/>
<dbReference type="Proteomes" id="UP000005640">
    <property type="component" value="Chromosome 3"/>
</dbReference>
<dbReference type="RNAct" id="P06276">
    <property type="molecule type" value="protein"/>
</dbReference>
<dbReference type="Bgee" id="ENSG00000114200">
    <property type="expression patterns" value="Expressed in parietal pleura and 162 other cell types or tissues"/>
</dbReference>
<dbReference type="ExpressionAtlas" id="P06276">
    <property type="expression patterns" value="baseline and differential"/>
</dbReference>
<dbReference type="GO" id="GO:0072562">
    <property type="term" value="C:blood microparticle"/>
    <property type="evidence" value="ECO:0007005"/>
    <property type="project" value="UniProtKB"/>
</dbReference>
<dbReference type="GO" id="GO:0005788">
    <property type="term" value="C:endoplasmic reticulum lumen"/>
    <property type="evidence" value="ECO:0007669"/>
    <property type="project" value="Ensembl"/>
</dbReference>
<dbReference type="GO" id="GO:0005576">
    <property type="term" value="C:extracellular region"/>
    <property type="evidence" value="ECO:0000304"/>
    <property type="project" value="Reactome"/>
</dbReference>
<dbReference type="GO" id="GO:0005615">
    <property type="term" value="C:extracellular space"/>
    <property type="evidence" value="ECO:0000318"/>
    <property type="project" value="GO_Central"/>
</dbReference>
<dbReference type="GO" id="GO:0005641">
    <property type="term" value="C:nuclear envelope lumen"/>
    <property type="evidence" value="ECO:0007669"/>
    <property type="project" value="Ensembl"/>
</dbReference>
<dbReference type="GO" id="GO:0005886">
    <property type="term" value="C:plasma membrane"/>
    <property type="evidence" value="ECO:0000318"/>
    <property type="project" value="GO_Central"/>
</dbReference>
<dbReference type="GO" id="GO:0003990">
    <property type="term" value="F:acetylcholinesterase activity"/>
    <property type="evidence" value="ECO:0000250"/>
    <property type="project" value="UniProtKB"/>
</dbReference>
<dbReference type="GO" id="GO:0001540">
    <property type="term" value="F:amyloid-beta binding"/>
    <property type="evidence" value="ECO:0000303"/>
    <property type="project" value="UniProtKB"/>
</dbReference>
<dbReference type="GO" id="GO:0003824">
    <property type="term" value="F:catalytic activity"/>
    <property type="evidence" value="ECO:0000303"/>
    <property type="project" value="UniProtKB"/>
</dbReference>
<dbReference type="GO" id="GO:0033265">
    <property type="term" value="F:choline binding"/>
    <property type="evidence" value="ECO:0007669"/>
    <property type="project" value="Ensembl"/>
</dbReference>
<dbReference type="GO" id="GO:0004104">
    <property type="term" value="F:cholinesterase activity"/>
    <property type="evidence" value="ECO:0000314"/>
    <property type="project" value="UniProtKB"/>
</dbReference>
<dbReference type="GO" id="GO:0019899">
    <property type="term" value="F:enzyme binding"/>
    <property type="evidence" value="ECO:0000303"/>
    <property type="project" value="UniProtKB"/>
</dbReference>
<dbReference type="GO" id="GO:0016788">
    <property type="term" value="F:hydrolase activity, acting on ester bonds"/>
    <property type="evidence" value="ECO:0000304"/>
    <property type="project" value="Reactome"/>
</dbReference>
<dbReference type="GO" id="GO:0042802">
    <property type="term" value="F:identical protein binding"/>
    <property type="evidence" value="ECO:0000353"/>
    <property type="project" value="IntAct"/>
</dbReference>
<dbReference type="GO" id="GO:0006581">
    <property type="term" value="P:acetylcholine catabolic process"/>
    <property type="evidence" value="ECO:0000318"/>
    <property type="project" value="GO_Central"/>
</dbReference>
<dbReference type="GO" id="GO:0019695">
    <property type="term" value="P:choline metabolic process"/>
    <property type="evidence" value="ECO:0000318"/>
    <property type="project" value="GO_Central"/>
</dbReference>
<dbReference type="GO" id="GO:0050783">
    <property type="term" value="P:cocaine metabolic process"/>
    <property type="evidence" value="ECO:0000304"/>
    <property type="project" value="UniProtKB"/>
</dbReference>
<dbReference type="GO" id="GO:0007612">
    <property type="term" value="P:learning"/>
    <property type="evidence" value="ECO:0007669"/>
    <property type="project" value="Ensembl"/>
</dbReference>
<dbReference type="GO" id="GO:0008285">
    <property type="term" value="P:negative regulation of cell population proliferation"/>
    <property type="evidence" value="ECO:0007669"/>
    <property type="project" value="Ensembl"/>
</dbReference>
<dbReference type="GO" id="GO:0050805">
    <property type="term" value="P:negative regulation of synaptic transmission"/>
    <property type="evidence" value="ECO:0007669"/>
    <property type="project" value="Ensembl"/>
</dbReference>
<dbReference type="GO" id="GO:0014016">
    <property type="term" value="P:neuroblast differentiation"/>
    <property type="evidence" value="ECO:0007669"/>
    <property type="project" value="Ensembl"/>
</dbReference>
<dbReference type="GO" id="GO:0016486">
    <property type="term" value="P:peptide hormone processing"/>
    <property type="evidence" value="ECO:0000304"/>
    <property type="project" value="Reactome"/>
</dbReference>
<dbReference type="GO" id="GO:0043279">
    <property type="term" value="P:response to alkaloid"/>
    <property type="evidence" value="ECO:0007669"/>
    <property type="project" value="Ensembl"/>
</dbReference>
<dbReference type="GO" id="GO:0051593">
    <property type="term" value="P:response to folic acid"/>
    <property type="evidence" value="ECO:0007669"/>
    <property type="project" value="Ensembl"/>
</dbReference>
<dbReference type="GO" id="GO:0051384">
    <property type="term" value="P:response to glucocorticoid"/>
    <property type="evidence" value="ECO:0007669"/>
    <property type="project" value="Ensembl"/>
</dbReference>
<dbReference type="GO" id="GO:0006805">
    <property type="term" value="P:xenobiotic metabolic process"/>
    <property type="evidence" value="ECO:0000304"/>
    <property type="project" value="Reactome"/>
</dbReference>
<dbReference type="CDD" id="cd00312">
    <property type="entry name" value="Esterase_lipase"/>
    <property type="match status" value="1"/>
</dbReference>
<dbReference type="FunFam" id="3.40.50.1820:FF:000029">
    <property type="entry name" value="Acetylcholinesterase"/>
    <property type="match status" value="1"/>
</dbReference>
<dbReference type="Gene3D" id="3.40.50.1820">
    <property type="entry name" value="alpha/beta hydrolase"/>
    <property type="match status" value="1"/>
</dbReference>
<dbReference type="InterPro" id="IPR029058">
    <property type="entry name" value="AB_hydrolase_fold"/>
</dbReference>
<dbReference type="InterPro" id="IPR050654">
    <property type="entry name" value="AChE-related_enzymes"/>
</dbReference>
<dbReference type="InterPro" id="IPR014788">
    <property type="entry name" value="AChE_tetra"/>
</dbReference>
<dbReference type="InterPro" id="IPR002018">
    <property type="entry name" value="CarbesteraseB"/>
</dbReference>
<dbReference type="InterPro" id="IPR019826">
    <property type="entry name" value="Carboxylesterase_B_AS"/>
</dbReference>
<dbReference type="InterPro" id="IPR019819">
    <property type="entry name" value="Carboxylesterase_B_CS"/>
</dbReference>
<dbReference type="InterPro" id="IPR000997">
    <property type="entry name" value="Cholinesterase"/>
</dbReference>
<dbReference type="PANTHER" id="PTHR43918">
    <property type="entry name" value="ACETYLCHOLINESTERASE"/>
    <property type="match status" value="1"/>
</dbReference>
<dbReference type="PANTHER" id="PTHR43918:SF5">
    <property type="entry name" value="CHOLINESTERASE"/>
    <property type="match status" value="1"/>
</dbReference>
<dbReference type="Pfam" id="PF08674">
    <property type="entry name" value="AChE_tetra"/>
    <property type="match status" value="1"/>
</dbReference>
<dbReference type="Pfam" id="PF00135">
    <property type="entry name" value="COesterase"/>
    <property type="match status" value="1"/>
</dbReference>
<dbReference type="PRINTS" id="PR00878">
    <property type="entry name" value="CHOLNESTRASE"/>
</dbReference>
<dbReference type="SUPFAM" id="SSF53474">
    <property type="entry name" value="alpha/beta-Hydrolases"/>
    <property type="match status" value="1"/>
</dbReference>
<dbReference type="PROSITE" id="PS00122">
    <property type="entry name" value="CARBOXYLESTERASE_B_1"/>
    <property type="match status" value="1"/>
</dbReference>
<dbReference type="PROSITE" id="PS00941">
    <property type="entry name" value="CARBOXYLESTERASE_B_2"/>
    <property type="match status" value="1"/>
</dbReference>
<keyword id="KW-0002">3D-structure</keyword>
<keyword id="KW-0903">Direct protein sequencing</keyword>
<keyword id="KW-0225">Disease variant</keyword>
<keyword id="KW-1015">Disulfide bond</keyword>
<keyword id="KW-0325">Glycoprotein</keyword>
<keyword id="KW-0378">Hydrolase</keyword>
<keyword id="KW-0597">Phosphoprotein</keyword>
<keyword id="KW-1267">Proteomics identification</keyword>
<keyword id="KW-1185">Reference proteome</keyword>
<keyword id="KW-0964">Secreted</keyword>
<keyword id="KW-0719">Serine esterase</keyword>
<keyword id="KW-0730">Sialic acid</keyword>
<keyword id="KW-0732">Signal</keyword>
<proteinExistence type="evidence at protein level"/>
<gene>
    <name type="primary">BCHE</name>
    <name type="synonym">CHE1</name>
</gene>
<reference key="1">
    <citation type="journal article" date="1987" name="Proc. Natl. Acad. Sci. U.S.A.">
        <title>Isolation and characterization of full-length cDNA clones coding for cholinesterase from fetal human tissues.</title>
        <authorList>
            <person name="Prody C.A."/>
            <person name="Zevin-Sonkin D."/>
            <person name="Gnatt A."/>
            <person name="Goldberg O."/>
            <person name="Soreq H."/>
        </authorList>
    </citation>
    <scope>NUCLEOTIDE SEQUENCE [MRNA]</scope>
    <source>
        <tissue>Fetus</tissue>
    </source>
</reference>
<reference key="2">
    <citation type="journal article" date="1987" name="Proc. Natl. Acad. Sci. U.S.A.">
        <title>Brain cDNA clone for human cholinesterase.</title>
        <authorList>
            <person name="McTiernan C."/>
            <person name="Adkins S."/>
            <person name="Chatonnet A."/>
            <person name="Vaughan T.A."/>
            <person name="Bartels C.F."/>
            <person name="Kott M."/>
            <person name="Rosenberry T.L."/>
            <person name="la Du B.N."/>
            <person name="Lockridge O."/>
        </authorList>
    </citation>
    <scope>NUCLEOTIDE SEQUENCE [MRNA]</scope>
    <source>
        <tissue>Brain</tissue>
    </source>
</reference>
<reference key="3">
    <citation type="journal article" date="1990" name="Biochemistry">
        <title>Structure of the gene for human butyrylcholinesterase. Evidence for a single copy.</title>
        <authorList>
            <person name="Arpagaus M."/>
            <person name="Kott M."/>
            <person name="Vatsis K.P."/>
            <person name="Bartels C.F."/>
            <person name="la Du B.N."/>
            <person name="Lockridge O."/>
        </authorList>
    </citation>
    <scope>NUCLEOTIDE SEQUENCE [GENOMIC DNA]</scope>
</reference>
<reference key="4">
    <citation type="journal article" date="2004" name="Nat. Genet.">
        <title>Complete sequencing and characterization of 21,243 full-length human cDNAs.</title>
        <authorList>
            <person name="Ota T."/>
            <person name="Suzuki Y."/>
            <person name="Nishikawa T."/>
            <person name="Otsuki T."/>
            <person name="Sugiyama T."/>
            <person name="Irie R."/>
            <person name="Wakamatsu A."/>
            <person name="Hayashi K."/>
            <person name="Sato H."/>
            <person name="Nagai K."/>
            <person name="Kimura K."/>
            <person name="Makita H."/>
            <person name="Sekine M."/>
            <person name="Obayashi M."/>
            <person name="Nishi T."/>
            <person name="Shibahara T."/>
            <person name="Tanaka T."/>
            <person name="Ishii S."/>
            <person name="Yamamoto J."/>
            <person name="Saito K."/>
            <person name="Kawai Y."/>
            <person name="Isono Y."/>
            <person name="Nakamura Y."/>
            <person name="Nagahari K."/>
            <person name="Murakami K."/>
            <person name="Yasuda T."/>
            <person name="Iwayanagi T."/>
            <person name="Wagatsuma M."/>
            <person name="Shiratori A."/>
            <person name="Sudo H."/>
            <person name="Hosoiri T."/>
            <person name="Kaku Y."/>
            <person name="Kodaira H."/>
            <person name="Kondo H."/>
            <person name="Sugawara M."/>
            <person name="Takahashi M."/>
            <person name="Kanda K."/>
            <person name="Yokoi T."/>
            <person name="Furuya T."/>
            <person name="Kikkawa E."/>
            <person name="Omura Y."/>
            <person name="Abe K."/>
            <person name="Kamihara K."/>
            <person name="Katsuta N."/>
            <person name="Sato K."/>
            <person name="Tanikawa M."/>
            <person name="Yamazaki M."/>
            <person name="Ninomiya K."/>
            <person name="Ishibashi T."/>
            <person name="Yamashita H."/>
            <person name="Murakawa K."/>
            <person name="Fujimori K."/>
            <person name="Tanai H."/>
            <person name="Kimata M."/>
            <person name="Watanabe M."/>
            <person name="Hiraoka S."/>
            <person name="Chiba Y."/>
            <person name="Ishida S."/>
            <person name="Ono Y."/>
            <person name="Takiguchi S."/>
            <person name="Watanabe S."/>
            <person name="Yosida M."/>
            <person name="Hotuta T."/>
            <person name="Kusano J."/>
            <person name="Kanehori K."/>
            <person name="Takahashi-Fujii A."/>
            <person name="Hara H."/>
            <person name="Tanase T.-O."/>
            <person name="Nomura Y."/>
            <person name="Togiya S."/>
            <person name="Komai F."/>
            <person name="Hara R."/>
            <person name="Takeuchi K."/>
            <person name="Arita M."/>
            <person name="Imose N."/>
            <person name="Musashino K."/>
            <person name="Yuuki H."/>
            <person name="Oshima A."/>
            <person name="Sasaki N."/>
            <person name="Aotsuka S."/>
            <person name="Yoshikawa Y."/>
            <person name="Matsunawa H."/>
            <person name="Ichihara T."/>
            <person name="Shiohata N."/>
            <person name="Sano S."/>
            <person name="Moriya S."/>
            <person name="Momiyama H."/>
            <person name="Satoh N."/>
            <person name="Takami S."/>
            <person name="Terashima Y."/>
            <person name="Suzuki O."/>
            <person name="Nakagawa S."/>
            <person name="Senoh A."/>
            <person name="Mizoguchi H."/>
            <person name="Goto Y."/>
            <person name="Shimizu F."/>
            <person name="Wakebe H."/>
            <person name="Hishigaki H."/>
            <person name="Watanabe T."/>
            <person name="Sugiyama A."/>
            <person name="Takemoto M."/>
            <person name="Kawakami B."/>
            <person name="Yamazaki M."/>
            <person name="Watanabe K."/>
            <person name="Kumagai A."/>
            <person name="Itakura S."/>
            <person name="Fukuzumi Y."/>
            <person name="Fujimori Y."/>
            <person name="Komiyama M."/>
            <person name="Tashiro H."/>
            <person name="Tanigami A."/>
            <person name="Fujiwara T."/>
            <person name="Ono T."/>
            <person name="Yamada K."/>
            <person name="Fujii Y."/>
            <person name="Ozaki K."/>
            <person name="Hirao M."/>
            <person name="Ohmori Y."/>
            <person name="Kawabata A."/>
            <person name="Hikiji T."/>
            <person name="Kobatake N."/>
            <person name="Inagaki H."/>
            <person name="Ikema Y."/>
            <person name="Okamoto S."/>
            <person name="Okitani R."/>
            <person name="Kawakami T."/>
            <person name="Noguchi S."/>
            <person name="Itoh T."/>
            <person name="Shigeta K."/>
            <person name="Senba T."/>
            <person name="Matsumura K."/>
            <person name="Nakajima Y."/>
            <person name="Mizuno T."/>
            <person name="Morinaga M."/>
            <person name="Sasaki M."/>
            <person name="Togashi T."/>
            <person name="Oyama M."/>
            <person name="Hata H."/>
            <person name="Watanabe M."/>
            <person name="Komatsu T."/>
            <person name="Mizushima-Sugano J."/>
            <person name="Satoh T."/>
            <person name="Shirai Y."/>
            <person name="Takahashi Y."/>
            <person name="Nakagawa K."/>
            <person name="Okumura K."/>
            <person name="Nagase T."/>
            <person name="Nomura N."/>
            <person name="Kikuchi H."/>
            <person name="Masuho Y."/>
            <person name="Yamashita R."/>
            <person name="Nakai K."/>
            <person name="Yada T."/>
            <person name="Nakamura Y."/>
            <person name="Ohara O."/>
            <person name="Isogai T."/>
            <person name="Sugano S."/>
        </authorList>
    </citation>
    <scope>NUCLEOTIDE SEQUENCE [LARGE SCALE MRNA]</scope>
    <scope>VARIANT THR-567</scope>
    <source>
        <tissue>Stomach</tissue>
    </source>
</reference>
<reference key="5">
    <citation type="journal article" date="2004" name="Genome Res.">
        <title>The status, quality, and expansion of the NIH full-length cDNA project: the Mammalian Gene Collection (MGC).</title>
        <authorList>
            <consortium name="The MGC Project Team"/>
        </authorList>
    </citation>
    <scope>NUCLEOTIDE SEQUENCE [LARGE SCALE MRNA]</scope>
    <source>
        <tissue>Skin</tissue>
    </source>
</reference>
<reference key="6">
    <citation type="journal article" date="1987" name="J. Biol. Chem.">
        <title>Complete amino acid sequence of human serum cholinesterase.</title>
        <authorList>
            <person name="Lockridge O."/>
            <person name="Bartels C.F."/>
            <person name="Vaughan T.A."/>
            <person name="Wong C.K."/>
            <person name="Norton S.E."/>
            <person name="Johnson L.L."/>
        </authorList>
    </citation>
    <scope>PROTEIN SEQUENCE OF 29-602</scope>
    <scope>SIGNAL SEQUENCE CLEAVAGE SITE</scope>
    <source>
        <tissue>Plasma</tissue>
    </source>
</reference>
<reference key="7">
    <citation type="journal article" date="2011" name="Vox Sang.">
        <title>Biochemical, molecular and preclinical characterization of a double-virus-reduced human butyrylcholinesterase preparation designed for clinical use.</title>
        <authorList>
            <person name="Weber A."/>
            <person name="Butterweck H."/>
            <person name="Mais-Paul U."/>
            <person name="Teschner W."/>
            <person name="Lei L."/>
            <person name="Muchitsch E.M."/>
            <person name="Kolarich D."/>
            <person name="Altmann F."/>
            <person name="Ehrlich H.J."/>
            <person name="Schwarz H.P."/>
        </authorList>
    </citation>
    <scope>PROTEIN SEQUENCE OF 29-37; 43-68; 71-163; 167-290; 294-522; 528-543 AND 549-602</scope>
    <scope>SIGNAL SEQUENCE CLEAVAGE SITE</scope>
    <scope>GLYCOSYLATION</scope>
    <scope>HOMOTETRAMERIZATION</scope>
    <source>
        <tissue>Plasma</tissue>
    </source>
</reference>
<reference key="8">
    <citation type="journal article" date="1987" name="J. Biol. Chem.">
        <title>Location of disulfide bonds within the sequence of human serum cholinesterase.</title>
        <authorList>
            <person name="Lockridge O."/>
            <person name="Adkins S."/>
            <person name="la Du B.N."/>
        </authorList>
    </citation>
    <scope>PARTIAL PROTEIN SEQUENCE</scope>
    <scope>DISULFIDE BONDS</scope>
</reference>
<reference key="9">
    <citation type="journal article" date="2004" name="Proteomics">
        <title>Screening for N-glycosylated proteins by liquid chromatography mass spectrometry.</title>
        <authorList>
            <person name="Bunkenborg J."/>
            <person name="Pilch B.J."/>
            <person name="Podtelejnikov A.V."/>
            <person name="Wisniewski J.R."/>
        </authorList>
    </citation>
    <scope>GLYCOSYLATION [LARGE SCALE ANALYSIS] AT ASN-509 AND ASN-514</scope>
    <source>
        <tissue>Plasma</tissue>
    </source>
</reference>
<reference key="10">
    <citation type="journal article" date="2005" name="J. Proteome Res.">
        <title>Human plasma N-glycoproteome analysis by immunoaffinity subtraction, hydrazide chemistry, and mass spectrometry.</title>
        <authorList>
            <person name="Liu T."/>
            <person name="Qian W.-J."/>
            <person name="Gritsenko M.A."/>
            <person name="Camp D.G. II"/>
            <person name="Monroe M.E."/>
            <person name="Moore R.J."/>
            <person name="Smith R.D."/>
        </authorList>
    </citation>
    <scope>GLYCOSYLATION [LARGE SCALE ANALYSIS] AT ASN-45; ASN-85; ASN-369; ASN-483; ASN-509 AND ASN-514</scope>
    <source>
        <tissue>Plasma</tissue>
    </source>
</reference>
<reference key="11">
    <citation type="journal article" date="2008" name="Proteomics">
        <title>Glycoproteomic characterization of butyrylcholinesterase from human plasma.</title>
        <authorList>
            <person name="Kolarich D."/>
            <person name="Weber A."/>
            <person name="Pabst M."/>
            <person name="Stadlmann J."/>
            <person name="Teschner W."/>
            <person name="Ehrlich H."/>
            <person name="Schwarz H.P."/>
            <person name="Altmann F."/>
        </authorList>
    </citation>
    <scope>GLYCOSYLATION AT ASN-45; ASN-85; ASN-134; ASN-269; ASN-284; ASN-369 AND ASN-483</scope>
    <scope>CHARACTERIZATION OF GLYCOSYLATION</scope>
</reference>
<reference key="12">
    <citation type="journal article" date="2009" name="Mol. Pharmacol.">
        <title>Adenovirus-transduced human butyrylcholinesterase in mouse blood functions as a bioscavenger of chemical warfare nerve agents.</title>
        <authorList>
            <person name="Chilukuri N."/>
            <person name="Duysen E.G."/>
            <person name="Parikh K."/>
            <person name="diTargiani R."/>
            <person name="Doctor B.P."/>
            <person name="Lockridge O."/>
            <person name="Saxena A."/>
        </authorList>
    </citation>
    <scope>FUNCTION</scope>
    <scope>SUBCELLULAR LOCATION</scope>
    <scope>TISSUE SPECIFICITY</scope>
    <scope>SUBUNIT</scope>
</reference>
<reference key="13">
    <citation type="journal article" date="2009" name="J. Proteome Res.">
        <title>Glycoproteomics analysis of human liver tissue by combination of multiple enzyme digestion and hydrazide chemistry.</title>
        <authorList>
            <person name="Chen R."/>
            <person name="Jiang X."/>
            <person name="Sun D."/>
            <person name="Han G."/>
            <person name="Wang F."/>
            <person name="Ye M."/>
            <person name="Wang L."/>
            <person name="Zou H."/>
        </authorList>
    </citation>
    <scope>GLYCOSYLATION [LARGE SCALE ANALYSIS] AT ASN-134 AND ASN-284</scope>
    <source>
        <tissue>Liver</tissue>
    </source>
</reference>
<reference key="14">
    <citation type="journal article" date="2009" name="Mol. Cell. Proteomics">
        <title>A strategy for precise and large scale identification of core fucosylated glycoproteins.</title>
        <authorList>
            <person name="Jia W."/>
            <person name="Lu Z."/>
            <person name="Fu Y."/>
            <person name="Wang H.P."/>
            <person name="Wang L.H."/>
            <person name="Chi H."/>
            <person name="Yuan Z.F."/>
            <person name="Zheng Z.B."/>
            <person name="Song L.N."/>
            <person name="Han H.H."/>
            <person name="Liang Y.M."/>
            <person name="Wang J.L."/>
            <person name="Cai Y."/>
            <person name="Zhang Y.K."/>
            <person name="Deng Y.L."/>
            <person name="Ying W.T."/>
            <person name="He S.M."/>
            <person name="Qian X.H."/>
        </authorList>
    </citation>
    <scope>GLYCOSYLATION AT ASN-284</scope>
</reference>
<reference key="15">
    <citation type="journal article" date="2009" name="Proteins">
        <title>The structure of G117H mutant of butyrylcholinesterase: nerve agents scavenger.</title>
        <authorList>
            <person name="Amitay M."/>
            <person name="Shurki A."/>
        </authorList>
    </citation>
    <scope>FUNCTION</scope>
    <scope>CATALYTIC ACTIVITY</scope>
</reference>
<reference key="16">
    <citation type="journal article" date="2012" name="Anal. Chim. Acta">
        <title>Identification of phosphorylated butyrylcholinesterase in human plasma using immunoaffinity purification and mass spectrometry.</title>
        <authorList>
            <person name="Aryal U.K."/>
            <person name="Lin C.T."/>
            <person name="Kim J.S."/>
            <person name="Heibeck T.H."/>
            <person name="Wang J."/>
            <person name="Qian W.J."/>
            <person name="Lin Y."/>
        </authorList>
    </citation>
    <scope>PHOSPHORYLATION AT SER-226</scope>
</reference>
<reference key="17">
    <citation type="journal article" date="2014" name="J. Proteomics">
        <title>An enzyme assisted RP-RPLC approach for in-depth analysis of human liver phosphoproteome.</title>
        <authorList>
            <person name="Bian Y."/>
            <person name="Song C."/>
            <person name="Cheng K."/>
            <person name="Dong M."/>
            <person name="Wang F."/>
            <person name="Huang J."/>
            <person name="Sun D."/>
            <person name="Wang L."/>
            <person name="Ye M."/>
            <person name="Zou H."/>
        </authorList>
    </citation>
    <scope>IDENTIFICATION BY MASS SPECTROMETRY [LARGE SCALE ANALYSIS]</scope>
    <source>
        <tissue>Liver</tissue>
    </source>
</reference>
<reference key="18">
    <citation type="journal article" date="2014" name="PLoS ONE">
        <title>Characterization of a novel BCHE 'silent' allele: point mutation (p.Val204Asp) causes loss of activity and prolonged apnea with suxamethonium.</title>
        <authorList>
            <person name="Delacour H."/>
            <person name="Lushchekina S."/>
            <person name="Mabboux I."/>
            <person name="Bousquet A."/>
            <person name="Ceppa F."/>
            <person name="Schopfer L.M."/>
            <person name="Lockridge O."/>
            <person name="Masson P."/>
        </authorList>
    </citation>
    <scope>BIOPHYSICOCHEMICAL PROPERTIES</scope>
    <scope>VARIANT BCHED ASP-232</scope>
</reference>
<reference key="19">
    <citation type="journal article" date="2003" name="J. Biol. Chem.">
        <title>Crystal structure of human butyrylcholinesterase and of its complexes with substrate and products.</title>
        <authorList>
            <person name="Nicolet Y."/>
            <person name="Lockridge O."/>
            <person name="Masson P."/>
            <person name="Fontecilla-Camps J.C."/>
            <person name="Nachon F."/>
        </authorList>
    </citation>
    <scope>X-RAY CRYSTALLOGRAPHY (2.00 ANGSTROMS) OF 29-557 IN COMPLEX WITH SUBSTRATE</scope>
    <scope>SUBUNIT</scope>
    <scope>GLYCOSYLATION AT ASN-85; ASN-134; ASN-269; ASN-369 AND ASN-513</scope>
    <scope>DISULFIDE BONDS</scope>
    <scope>ACTIVE SITE</scope>
</reference>
<reference key="20">
    <citation type="journal article" date="2005" name="Biochemistry">
        <title>Role of water in aging of human butyrylcholinesterase inhibited by echothiophate: the crystal structure suggests two alternative mechanisms of aging.</title>
        <authorList>
            <person name="Nachon F."/>
            <person name="Asojo O.A."/>
            <person name="Borgstahl G.E.O."/>
            <person name="Masson P."/>
            <person name="Lockridge O."/>
        </authorList>
    </citation>
    <scope>X-RAY CRYSTALLOGRAPHY (2.10 ANGSTROMS) OF 29-557 IN COMPLEX WITH ECHOTHIOPHATE</scope>
    <scope>DISULFIDE BONDS</scope>
    <scope>GLYCOSYLATION AT ASN-85; ASN-134; ASN-269; ASN-369 AND ASN-513</scope>
</reference>
<reference key="21">
    <citation type="journal article" date="2007" name="Acta Crystallogr. F">
        <title>Crystallization and X-ray structure of full-length recombinant human butyrylcholinesterase.</title>
        <authorList>
            <person name="Ngamelue M.N."/>
            <person name="Homma K."/>
            <person name="Lockridge O."/>
            <person name="Asojo O.A."/>
        </authorList>
    </citation>
    <scope>X-RAY CRYSTALLOGRAPHY (2.80 ANGSTROMS)</scope>
    <scope>DISULFIDE BONDS</scope>
    <scope>GLYCOSYLATION AT ASN-85; ASN-134; ASN-369 AND ASN-513</scope>
    <scope>SUBUNIT</scope>
</reference>
<reference key="22">
    <citation type="journal article" date="2007" name="FEBS J.">
        <title>Mechanisms of cholinesterase inhibition by inorganic mercury.</title>
        <authorList>
            <person name="Frasco M.F."/>
            <person name="Colletier J.-P."/>
            <person name="Weik M."/>
            <person name="Carvalho F."/>
            <person name="Guilhermino L."/>
            <person name="Stojan J."/>
            <person name="Fournier D."/>
        </authorList>
    </citation>
    <scope>X-RAY CRYSTALLOGRAPHY (2.75 ANGSTROMS) OF 29-557 IN COMPLEX WITH MERCURY IONS AND BUTANOIC ACID</scope>
    <scope>DISULFIDE BONDS</scope>
    <scope>GLYCOSYLATION AT ASN-85; ASN-134; ASN-269; ASN-369 AND ASN-513</scope>
    <scope>ACTIVITY REGULATION</scope>
</reference>
<reference key="23">
    <citation type="journal article" date="2008" name="J. Am. Chem. Soc.">
        <title>Aging of cholinesterases phosphylated by tabun proceeds through O-dealkylation.</title>
        <authorList>
            <person name="Carletti E."/>
            <person name="Li H."/>
            <person name="Li B."/>
            <person name="Ekstroem F."/>
            <person name="Nicolet Y."/>
            <person name="Loiodice M."/>
            <person name="Gillon E."/>
            <person name="Froment M.T."/>
            <person name="Lockridge O."/>
            <person name="Schopfer L.M."/>
            <person name="Masson P."/>
            <person name="Nachon F."/>
        </authorList>
    </citation>
    <scope>X-RAY CRYSTALLOGRAPHY (2.10 ANGSTROMS) OF 29-557 IN COMPLEX WITH TABUN</scope>
    <scope>ACTIVITY REGULATION</scope>
    <scope>IDENTIFICATION BY MASS SPECTROMETRY</scope>
    <scope>GLYCOSYLATION AT ASN-85; ASN-134; ASN-284; ASN-369 AND ASN-513</scope>
</reference>
<reference key="24">
    <citation type="journal article" date="2009" name="Biochem. J.">
        <title>Structure-activity analysis of aging and reactivation of human butyrylcholinesterase inhibited by analogues of tabun.</title>
        <authorList>
            <person name="Carletti E."/>
            <person name="Aurbek N."/>
            <person name="Gillon E."/>
            <person name="Loiodice M."/>
            <person name="Nicolet Y."/>
            <person name="Fontecilla-Camps J.C."/>
            <person name="Masson P."/>
            <person name="Thiermann H."/>
            <person name="Nachon F."/>
            <person name="Worek F."/>
        </authorList>
    </citation>
    <scope>X-RAY CRYSTALLOGRAPHY (2.00 ANGSTROMS) OF 29-557 IN COMPLEX WITH TABUN ANALOGS</scope>
    <scope>CATALYTIC ACTIVITY</scope>
    <scope>SUBCELLULAR LOCATION</scope>
    <scope>TISSUE SPECIFICITY</scope>
    <scope>GLYCOSYLATION AT ASN-85; ASN-134; ASN-269; ASN-284; ASN-369 AND ASN-513</scope>
    <scope>ACTIVITY REGULATION</scope>
</reference>
<reference key="25">
    <citation type="journal article" date="2013" name="Biochem. J.">
        <title>Crystal structures of human cholinesterases in complex with huprine W and tacrine: elements of specificity for anti-Alzheimer's drugs targeting acetyl- and butyryl-cholinesterase.</title>
        <authorList>
            <person name="Nachon F."/>
            <person name="Carletti E."/>
            <person name="Ronco C."/>
            <person name="Trovaslet M."/>
            <person name="Nicolet Y."/>
            <person name="Jean L."/>
            <person name="Renard P.Y."/>
        </authorList>
    </citation>
    <scope>X-RAY CRYSTALLOGRAPHY (3.10 ANGSTROMS) OF 29-557 IN COMPLEX WITH TACRINE</scope>
    <scope>DISULFIDE BOND</scope>
    <scope>GLYCOSYLATION AT ASN-85; ASN-134; ASN-269; ASN-284; ASN-369 AND ASN-513</scope>
</reference>
<reference key="26">
    <citation type="journal article" date="1989" name="Proc. Natl. Acad. Sci. U.S.A.">
        <title>Identification of the structural mutation responsible for the dibucaine-resistant (atypical) variant form of human serum cholinesterase.</title>
        <authorList>
            <person name="McGuire M.C."/>
            <person name="Nogueira C.P."/>
            <person name="Bartels C.F."/>
            <person name="Lightstone H."/>
            <person name="Hajra A."/>
            <person name="van der Spek A.F.L."/>
            <person name="Lockridge O."/>
            <person name="la Du B.N."/>
        </authorList>
    </citation>
    <scope>VARIANT BCHED GLY-98</scope>
</reference>
<reference key="27">
    <citation type="journal article" date="1992" name="Am. J. Hum. Genet.">
        <title>DNA mutations associated with the human butyrylcholinesterase J-variant.</title>
        <authorList>
            <person name="Bartels C.F."/>
            <person name="James K."/>
            <person name="La Du B.N."/>
        </authorList>
    </citation>
    <scope>VARIANT BCHED VAL-525</scope>
</reference>
<reference key="28">
    <citation type="journal article" date="1992" name="Am. J. Hum. Genet.">
        <title>Identification of two different point mutations associated with the fluoride-resistant phenotype for human butyrylcholinesterase.</title>
        <authorList>
            <person name="Nogueira C.P."/>
            <person name="Bartels C.F."/>
            <person name="McGuire M.C."/>
            <person name="Adkins S."/>
            <person name="Lubrano T."/>
            <person name="Rubinstein H.M."/>
            <person name="Lightstone H."/>
            <person name="Van Der Spek A.F.L."/>
            <person name="Lockridge O."/>
            <person name="La Du B.N."/>
        </authorList>
    </citation>
    <scope>VARIANTS BCHED MET-271 AND VAL-418</scope>
</reference>
<reference key="29">
    <citation type="journal article" date="1992" name="Intern. Med.">
        <title>A variant serum cholinesterase and a confirmed point mutation at Gly-365 to Arg found in a patient with liver cirrhosis.</title>
        <authorList>
            <person name="Hada T."/>
            <person name="Muratani K."/>
            <person name="Ohue T."/>
            <person name="Imanishi H."/>
            <person name="Moriwaki Y."/>
            <person name="Itoh M."/>
            <person name="Amuro Y."/>
            <person name="Higashino K."/>
        </authorList>
    </citation>
    <scope>VARIANT BCHED ARG-393</scope>
</reference>
<reference key="30">
    <citation type="journal article" date="1992" name="Pharmacogenetics">
        <title>Structural basis of the butyrylcholinesterase H-variant segregating in two Danish families.</title>
        <authorList>
            <person name="Jensen F.S."/>
            <person name="Bartels C.F."/>
            <person name="La Du B.N."/>
        </authorList>
    </citation>
    <scope>VARIANTS BCHED GLY-98 AND MET-170</scope>
</reference>
<reference key="31">
    <citation type="journal article" date="1995" name="Clin. Chim. Acta">
        <title>Genetic basis of the silent phenotype of serum butyrylcholinesterase in three compound heterozygotes.</title>
        <authorList>
            <person name="Maekawa M."/>
            <person name="Sudo K."/>
            <person name="Kanno T."/>
            <person name="Kotani K."/>
            <person name="Dey D.C."/>
            <person name="Ishikawa J."/>
            <person name="Izumi M."/>
            <person name="Etoh K."/>
        </authorList>
    </citation>
    <scope>VARIANTS BCHED PRO-278; ARG-393; SER-446; CYS-543 AND THR-567</scope>
</reference>
<reference key="32">
    <citation type="journal article" date="1995" name="Hum. Mutat.">
        <title>Mutations of human butyrylcholinesterase gene in a family with hypocholinesterasemia.</title>
        <authorList>
            <person name="Iida S."/>
            <person name="Kinoshita M."/>
            <person name="Fujii H."/>
            <person name="Moriyama Y."/>
            <person name="Nakamura Y."/>
            <person name="Yura N."/>
            <person name="Moriwaki K."/>
        </authorList>
    </citation>
    <scope>VARIANT BCHED ILE-358</scope>
</reference>
<reference key="33">
    <citation type="journal article" date="1996" name="Am. J. Hum. Genet.">
        <title>Characterization of 12 silent alleles of the human butyrylcholinesterase (BCHE) gene.</title>
        <authorList>
            <person name="Primo-Parmo S.L."/>
            <person name="Bartels C.F."/>
            <person name="Wiersema B."/>
            <person name="van der Spek A.F.L."/>
            <person name="Innis J.W."/>
            <person name="La Du B.N."/>
        </authorList>
    </citation>
    <scope>VARIANTS BCHED CYS-61; SER-65; PHE-153; GLU-198; GLY-226; THR-229; ARG-499 AND LEU-546</scope>
    <scope>CHARACTERIZATION OF VARIANTS BCHED SER-65; PHE-153; GLU-198; ARG-499 AND LEU-546</scope>
</reference>
<reference key="34">
    <citation type="journal article" date="1997" name="Ann. Hum. Genet.">
        <title>Genetic analysis of a Japanese patient with butyrylcholinesterase deficiency.</title>
        <authorList>
            <person name="Hidaka K."/>
            <person name="Iuchi I."/>
            <person name="Tomita M."/>
            <person name="Watanabe Y."/>
            <person name="Minatogawa Y."/>
            <person name="Iwasaki K."/>
            <person name="Gotoh K."/>
            <person name="Shimizu C."/>
        </authorList>
    </citation>
    <scope>VARIANT BCHED CYS-156</scope>
</reference>
<reference key="35">
    <citation type="journal article" date="1997" name="Biochem. Biophys. Res. Commun.">
        <title>Human butyrylcholinesterase L330I mutation belongs to a fluoride-resistant gene, by expression in human fetal kidney cells.</title>
        <authorList>
            <person name="Sudo K."/>
            <person name="Maekawa M."/>
            <person name="Akizuki S."/>
            <person name="Magara T."/>
            <person name="Ogasawara H."/>
            <person name="Tanaka T."/>
        </authorList>
    </citation>
    <scope>VARIANT BUTYRYLCHOLINESTERASE DEFICIENCY ILE-358</scope>
</reference>
<reference key="36">
    <citation type="journal article" date="1997" name="Clin. Chem.">
        <title>Genetic mutations of butyrylcholine esterase identified from phenotypic abnormalities in Japan.</title>
        <authorList>
            <person name="Maekawa M."/>
            <person name="Sudo K."/>
            <person name="Dey D.C."/>
            <person name="Ishikawa J."/>
            <person name="Izumi M."/>
            <person name="Kotani K."/>
            <person name="Kanno T."/>
        </authorList>
    </citation>
    <scope>VARIANTS BCHED ILE-32 DEL; MET-52; SER-128; PRO-278; ARG-295; ILE-358; ARG-393; SER-446; CYS-543 AND THR-567</scope>
</reference>
<reference key="37">
    <citation type="journal article" date="1997" name="Pharmacogenetics">
        <title>Characterization of an unstable variant (BChE115D) of human butyrylcholinesterase.</title>
        <authorList>
            <person name="Primo-Parmo S.L."/>
            <person name="Lightstone H."/>
            <person name="La Du B.N."/>
        </authorList>
    </citation>
    <scope>VARIANTS BCHED GLY-98 AND ASP-143</scope>
</reference>
<reference key="38">
    <citation type="journal article" date="1998" name="Clin. Chim. Acta">
        <title>Identification of a point mutation associated with a silent phenotype of human serum butyrylcholinesterase - a case of familial cholinesterasemia.</title>
        <authorList>
            <person name="Sakamoto N."/>
            <person name="Hidaka K."/>
            <person name="Fujisawa T."/>
            <person name="Maeda M."/>
            <person name="Iuchi I."/>
        </authorList>
    </citation>
    <scope>VARIANT BCHED VAL-227</scope>
</reference>
<reference key="39">
    <citation type="journal article" date="1999" name="Clin. Chim. Acta">
        <title>Three point mutations of human butyrylcholinesterase in a Japanese family and the alterations of three-dimensional structure.</title>
        <authorList>
            <person name="Asanuma K."/>
            <person name="Yagihashi A."/>
            <person name="Uehara N."/>
            <person name="Kida T."/>
            <person name="Watanabe N."/>
        </authorList>
    </citation>
    <scope>VARIANTS BCHED ILE-358; ARG-393 AND CYS-543</scope>
</reference>
<reference key="40">
    <citation type="journal article" date="2002" name="Ann. Clin. Biochem.">
        <title>Naturally occurring mutation, Asp70His, in human butyrylcholinesterase.</title>
        <authorList>
            <person name="Boeck A.T."/>
            <person name="Fry D.L."/>
            <person name="Sastre A."/>
            <person name="Lockridge O."/>
        </authorList>
    </citation>
    <scope>VARIANTS BCHED GLY-98; HIS-98; MET-271 AND THR-567</scope>
</reference>
<reference key="41">
    <citation type="journal article" date="2003" name="Clin. Chem.">
        <title>Butyrylcholinesterase (BCHE) genotyping for post-succinylcholine apnea in an Australian population.</title>
        <authorList>
            <person name="Yen T."/>
            <person name="Nightingale B.N."/>
            <person name="Burns J.C."/>
            <person name="Sullivan D.R."/>
            <person name="Stewart P.M."/>
        </authorList>
    </citation>
    <scope>VARIANTS BCHED ILE-56; TYR-124; CYS-414 AND LYS-488</scope>
</reference>
<reference key="42">
    <citation type="journal article" date="2005" name="Clin. Chim. Acta">
        <title>Novel mutations in the BCHE gene in patients with no butyrylcholinesterase activity.</title>
        <authorList>
            <person name="On-Kei Chan A."/>
            <person name="Lam C.-W."/>
            <person name="Tong S.-F."/>
            <person name="Man Tung C."/>
            <person name="Yung K."/>
            <person name="Chan Y.-W."/>
            <person name="Au K.-M."/>
            <person name="Yuen Y.-P."/>
            <person name="Hung C.-T."/>
            <person name="Ng K.-P."/>
            <person name="Shek C.-C."/>
        </authorList>
    </citation>
    <scope>VARIANTS BCHED CYS-414 AND LEU-502</scope>
</reference>
<reference key="43">
    <citation type="journal article" date="2005" name="Mol. Genet. Metab.">
        <title>Four new mutations in the BCHE gene of human butyrylcholinesterase in a Brazilian blood donor sample.</title>
        <authorList>
            <person name="Souza R.L."/>
            <person name="Mikami L.R."/>
            <person name="Maegawa R.O."/>
            <person name="Chautard-Freire-Maia E.A."/>
        </authorList>
    </citation>
    <scope>VARIANT MET-127</scope>
    <scope>VARIANTS BCHED GLY-98; ARG-103 AND ASP-118</scope>
</reference>
<reference key="44">
    <citation type="journal article" date="2006" name="Pharmacogenet. Genomics">
        <title>Naturally occurring mutation Leu307Pro of human butyrylcholinesterase in the Vysya community of India.</title>
        <authorList>
            <person name="Manoharan I."/>
            <person name="Wieseler S."/>
            <person name="Layer P.G."/>
            <person name="Lockridge O."/>
            <person name="Boopathy R."/>
        </authorList>
    </citation>
    <scope>VARIANT BCHED PRO-335</scope>
    <scope>CHARACTERIZATION OF VARIANT BCHED PRO-335</scope>
</reference>
<reference key="45">
    <citation type="journal article" date="2007" name="Pharmacogenet. Genomics">
        <title>Expression of three naturally occurring genetic variants (G75R, E90D, I99M) of the BCHE gene of human butyrylcholinesterase.</title>
        <authorList>
            <person name="Mikami L.R."/>
            <person name="Wieseler S."/>
            <person name="Souza R.L."/>
            <person name="Schopfer L.M."/>
            <person name="Lockridge O."/>
            <person name="Chautard-Freire-Maia E.A."/>
        </authorList>
    </citation>
    <scope>CHARACTERIZATION OF VARIANT MET-127</scope>
    <scope>CHARACTERIZATION OF VARIANTS BCHED ARG-103 AND ASP-118</scope>
</reference>
<reference key="46">
    <citation type="journal article" date="2007" name="Pharmacogenet. Genomics">
        <title>Two novel mutations in the BCHE gene in patients with prolonged duration of action of mivacurium or succinylcholine during anaesthesia.</title>
        <authorList>
            <person name="Gaetke M.R."/>
            <person name="Bundgaard J.R."/>
            <person name="Viby-Mogensen J."/>
        </authorList>
    </citation>
    <scope>VARIANT BCHED ASP-356</scope>
</reference>
<reference key="47">
    <citation type="journal article" date="2008" name="Pharmacogenet. Genomics">
        <title>Five new naturally occurring mutations of the BCHE gene and frequencies of 12 butyrylcholinesterase alleles in a Brazilian population.</title>
        <authorList>
            <person name="Mikami L.R."/>
            <person name="Wieseler S."/>
            <person name="Souza R.L."/>
            <person name="Schopfer L.M."/>
            <person name="Nachon F."/>
            <person name="Lockridge O."/>
            <person name="Chautard-Freire-Maia E.A."/>
        </authorList>
    </citation>
    <scope>VARIANT BCHED CYS-361</scope>
    <scope>VARIANTS ARG-40; MET-322 AND TRP-498</scope>
    <scope>CHARACTERIZATION OF VARIANT BCHED CYS-361</scope>
    <scope>CHARACTERIZATION OF VARIANTS ARG-40; MET-322 AND TRP-498</scope>
</reference>
<reference key="48">
    <citation type="journal article" date="2014" name="Biochem. Pharmacol.">
        <title>Characterization of a novel butyrylcholinesterase point mutation (p.Ala34Val), 'silent' with mivacurium.</title>
        <authorList>
            <person name="Delacour H."/>
            <person name="Lushchekina S."/>
            <person name="Mabboux I."/>
            <person name="Ceppa F."/>
            <person name="Masson P."/>
            <person name="Schopfer L.M."/>
            <person name="Lockridge O."/>
        </authorList>
    </citation>
    <scope>VARIANTS BCHED VAL-62 AND GLY-98</scope>
    <scope>CHARACTERIZATION OF VARIANTS BCHED VAL-62 AND GLY-98</scope>
</reference>
<name>CHLE_HUMAN</name>
<protein>
    <recommendedName>
        <fullName>Cholinesterase</fullName>
        <ecNumber>3.1.1.8</ecNumber>
    </recommendedName>
    <alternativeName>
        <fullName>Acylcholine acylhydrolase</fullName>
    </alternativeName>
    <alternativeName>
        <fullName>Butyrylcholine esterase</fullName>
    </alternativeName>
    <alternativeName>
        <fullName>Choline esterase II</fullName>
    </alternativeName>
    <alternativeName>
        <fullName>Pseudocholinesterase</fullName>
    </alternativeName>
</protein>
<comment type="function">
    <text evidence="27 28">Esterase with broad substrate specificity. Contributes to the inactivation of the neurotransmitter acetylcholine. Can degrade neurotoxic organophosphate esters.</text>
</comment>
<comment type="catalytic activity">
    <reaction evidence="26 27">
        <text>an acylcholine + H2O = a carboxylate + choline + H(+)</text>
        <dbReference type="Rhea" id="RHEA:21964"/>
        <dbReference type="ChEBI" id="CHEBI:15354"/>
        <dbReference type="ChEBI" id="CHEBI:15377"/>
        <dbReference type="ChEBI" id="CHEBI:15378"/>
        <dbReference type="ChEBI" id="CHEBI:29067"/>
        <dbReference type="ChEBI" id="CHEBI:35287"/>
        <dbReference type="EC" id="3.1.1.8"/>
    </reaction>
</comment>
<comment type="activity regulation">
    <text evidence="17 23 26">Inhibited by mercury. Inhibited by Tabun. Tabun forms a covalent adduct with Ser-226 that becomes irreversible upon aging.</text>
</comment>
<comment type="biophysicochemical properties">
    <kinetics>
        <KM evidence="32">18 uM for butyrylthiocholine (at 25 degrees Celsius)</KM>
    </kinetics>
</comment>
<comment type="subunit">
    <text evidence="4 12 17 19 23 26 28 35">Homotetramer; disulfide-linked. Dimer of dimers.</text>
</comment>
<comment type="interaction">
    <interactant intactId="EBI-7936069">
        <id>P06276</id>
    </interactant>
    <interactant intactId="EBI-946046">
        <id>P54252</id>
        <label>ATXN3</label>
    </interactant>
    <organismsDiffer>false</organismsDiffer>
    <experiments>3</experiments>
</comment>
<comment type="interaction">
    <interactant intactId="EBI-7936069">
        <id>P06276</id>
    </interactant>
    <interactant intactId="EBI-10988864">
        <id>P46379-2</id>
        <label>BAG6</label>
    </interactant>
    <organismsDiffer>false</organismsDiffer>
    <experiments>3</experiments>
</comment>
<comment type="interaction">
    <interactant intactId="EBI-7936069">
        <id>P06276</id>
    </interactant>
    <interactant intactId="EBI-7936069">
        <id>P06276</id>
        <label>BCHE</label>
    </interactant>
    <organismsDiffer>false</organismsDiffer>
    <experiments>8</experiments>
</comment>
<comment type="interaction">
    <interactant intactId="EBI-7936069">
        <id>P06276</id>
    </interactant>
    <interactant intactId="EBI-718729">
        <id>P55212</id>
        <label>CASP6</label>
    </interactant>
    <organismsDiffer>false</organismsDiffer>
    <experiments>3</experiments>
</comment>
<comment type="interaction">
    <interactant intactId="EBI-7936069">
        <id>P06276</id>
    </interactant>
    <interactant intactId="EBI-12593112">
        <id>O75190-2</id>
        <label>DNAJB6</label>
    </interactant>
    <organismsDiffer>false</organismsDiffer>
    <experiments>3</experiments>
</comment>
<comment type="interaction">
    <interactant intactId="EBI-7936069">
        <id>P06276</id>
    </interactant>
    <interactant intactId="EBI-948266">
        <id>O14901</id>
        <label>KLF11</label>
    </interactant>
    <organismsDiffer>false</organismsDiffer>
    <experiments>3</experiments>
</comment>
<comment type="interaction">
    <interactant intactId="EBI-7936069">
        <id>P06276</id>
    </interactant>
    <interactant intactId="EBI-21591415">
        <id>P13473-2</id>
        <label>LAMP2</label>
    </interactant>
    <organismsDiffer>false</organismsDiffer>
    <experiments>3</experiments>
</comment>
<comment type="interaction">
    <interactant intactId="EBI-7936069">
        <id>P06276</id>
    </interactant>
    <interactant intactId="EBI-5280197">
        <id>O75400-2</id>
        <label>PRPF40A</label>
    </interactant>
    <organismsDiffer>false</organismsDiffer>
    <experiments>3</experiments>
</comment>
<comment type="interaction">
    <interactant intactId="EBI-7936069">
        <id>P06276</id>
    </interactant>
    <interactant intactId="EBI-286642">
        <id>P62826</id>
        <label>RAN</label>
    </interactant>
    <organismsDiffer>false</organismsDiffer>
    <experiments>3</experiments>
</comment>
<comment type="interaction">
    <interactant intactId="EBI-7936069">
        <id>P06276</id>
    </interactant>
    <interactant intactId="EBI-1042500">
        <id>P67812</id>
        <label>SEC11A</label>
    </interactant>
    <organismsDiffer>false</organismsDiffer>
    <experiments>3</experiments>
</comment>
<comment type="interaction">
    <interactant intactId="EBI-7936069">
        <id>P06276</id>
    </interactant>
    <interactant intactId="EBI-738612">
        <id>P02814</id>
        <label>SMR3B</label>
    </interactant>
    <organismsDiffer>false</organismsDiffer>
    <experiments>2</experiments>
</comment>
<comment type="subcellular location">
    <subcellularLocation>
        <location evidence="26 28">Secreted</location>
    </subcellularLocation>
</comment>
<comment type="tissue specificity">
    <text evidence="26 28">Detected in blood plasma (at protein level). Present in most cells except erythrocytes.</text>
</comment>
<comment type="PTM">
    <text evidence="4 10 12 15 17 19 21 23 24 25 26 29">N-glycosylated. No other PTM detected (PubMed:20946535). The major N-glycan structures are of the complex diantennary type with 1 and 2 N-acetylneuraminic acid molecules (Neu5Ac) making up approximately 33% and 47% of the total N-glycans, respectively. Only low amounts of fucosylated diantennary N-glycans are detected (approximately 2%). Triantennary N-glycans with or without fucose amount to approximately 13%, whereas 5% of the total N-glycans are of the oligomannosidic or hybrid type.</text>
</comment>
<comment type="disease" evidence="2 3 5 6 7 8 11 13 14 16 18 20 22 32 33 34 37 38 39 40 41 42 43 44">
    <disease id="DI-01302">
        <name>Butyrylcholinesterase deficiency</name>
        <acronym>BCHED</acronym>
        <description>An autosomal recessive metabolic condition characterized by increased sensitivity to certain anesthetic drugs, including the muscle relaxants succinylcholine or mivacurium. BCHED results in slower hydrolysis of these drugs and, consequently, a prolonged neuromuscular block, leading to apnea. The duration of the prolonged apnea varies significantly depending on the extent of the enzyme deficiency.</description>
        <dbReference type="MIM" id="617936"/>
    </disease>
    <text>The disease is caused by variants affecting the gene represented in this entry.</text>
</comment>
<comment type="similarity">
    <text evidence="45">Belongs to the type-B carboxylesterase/lipase family.</text>
</comment>
<organism>
    <name type="scientific">Homo sapiens</name>
    <name type="common">Human</name>
    <dbReference type="NCBI Taxonomy" id="9606"/>
    <lineage>
        <taxon>Eukaryota</taxon>
        <taxon>Metazoa</taxon>
        <taxon>Chordata</taxon>
        <taxon>Craniata</taxon>
        <taxon>Vertebrata</taxon>
        <taxon>Euteleostomi</taxon>
        <taxon>Mammalia</taxon>
        <taxon>Eutheria</taxon>
        <taxon>Euarchontoglires</taxon>
        <taxon>Primates</taxon>
        <taxon>Haplorrhini</taxon>
        <taxon>Catarrhini</taxon>
        <taxon>Hominidae</taxon>
        <taxon>Homo</taxon>
    </lineage>
</organism>
<sequence length="602" mass="68418">MHSKVTIICIRFLFWFLLLCMLIGKSHTEDDIIIATKNGKVRGMNLTVFGGTVTAFLGIPYAQPPLGRLRFKKPQSLTKWSDIWNATKYANSCCQNIDQSFPGFHGSEMWNPNTDLSEDCLYLNVWIPAPKPKNATVLIWIYGGGFQTGTSSLHVYDGKFLARVERVIVVSMNYRVGALGFLALPGNPEAPGNMGLFDQQLALQWVQKNIAAFGGNPKSVTLFGESAGAASVSLHLLSPGSHSLFTRAILQSGSFNAPWAVTSLYEARNRTLNLAKLTGCSRENETEIIKCLRNKDPQEILLNEAFVVPYGTPLSVNFGPTVDGDFLTDMPDILLELGQFKKTQILVGVNKDEGTAFLVYGAPGFSKDNNSIITRKEFQEGLKIFFPGVSEFGKESILFHYTDWVDDQRPENYREALGDVVGDYNFICPALEFTKKFSEWGNNAFFYYFEHRSSKLPWPEWMGVMHGYEIEFVFGLPLERRDNYTKAEEILSRSIVKRWANFAKYGNPNETQNNSTSWPVFKSTEQKYLTLNTESTRIMTKLRAQQCRFWTSFFPKVLEMTGNIDEAEWEWKAGFHRWNNYMMDWKNQFNDYTSKKESCVGL</sequence>